<evidence type="ECO:0000255" key="1">
    <source>
        <dbReference type="HAMAP-Rule" id="MF_01343"/>
    </source>
</evidence>
<evidence type="ECO:0000269" key="2">
    <source>
    </source>
</evidence>
<evidence type="ECO:0000269" key="3">
    <source>
    </source>
</evidence>
<evidence type="ECO:0000269" key="4">
    <source>
    </source>
</evidence>
<evidence type="ECO:0000305" key="5"/>
<evidence type="ECO:0007829" key="6">
    <source>
        <dbReference type="PDB" id="2VQE"/>
    </source>
</evidence>
<evidence type="ECO:0007829" key="7">
    <source>
        <dbReference type="PDB" id="2ZM6"/>
    </source>
</evidence>
<evidence type="ECO:0007829" key="8">
    <source>
        <dbReference type="PDB" id="4B3S"/>
    </source>
</evidence>
<evidence type="ECO:0007829" key="9">
    <source>
        <dbReference type="PDB" id="4LFB"/>
    </source>
</evidence>
<gene>
    <name evidence="1" type="primary">rpsO</name>
    <name type="ordered locus">TTHA1138</name>
</gene>
<dbReference type="EMBL" id="L09121">
    <property type="protein sequence ID" value="AAD38865.1"/>
    <property type="molecule type" value="Genomic_DNA"/>
</dbReference>
<dbReference type="EMBL" id="AP008226">
    <property type="protein sequence ID" value="BAD70961.1"/>
    <property type="molecule type" value="Genomic_DNA"/>
</dbReference>
<dbReference type="PIR" id="T52484">
    <property type="entry name" value="T52484"/>
</dbReference>
<dbReference type="RefSeq" id="WP_008632621.1">
    <property type="nucleotide sequence ID" value="NC_006461.1"/>
</dbReference>
<dbReference type="RefSeq" id="YP_144404.1">
    <property type="nucleotide sequence ID" value="NC_006461.1"/>
</dbReference>
<dbReference type="PDB" id="1FJG">
    <property type="method" value="X-ray"/>
    <property type="resolution" value="3.00 A"/>
    <property type="chains" value="O=1-89"/>
</dbReference>
<dbReference type="PDB" id="1FKA">
    <property type="method" value="X-ray"/>
    <property type="resolution" value="3.30 A"/>
    <property type="chains" value="O=1-89"/>
</dbReference>
<dbReference type="PDB" id="1G1X">
    <property type="method" value="X-ray"/>
    <property type="resolution" value="2.60 A"/>
    <property type="chains" value="B/G=2-89"/>
</dbReference>
<dbReference type="PDB" id="1HNW">
    <property type="method" value="X-ray"/>
    <property type="resolution" value="3.40 A"/>
    <property type="chains" value="O=1-89"/>
</dbReference>
<dbReference type="PDB" id="1HNX">
    <property type="method" value="X-ray"/>
    <property type="resolution" value="3.40 A"/>
    <property type="chains" value="O=1-89"/>
</dbReference>
<dbReference type="PDB" id="1HNZ">
    <property type="method" value="X-ray"/>
    <property type="resolution" value="3.30 A"/>
    <property type="chains" value="O=1-89"/>
</dbReference>
<dbReference type="PDB" id="1HR0">
    <property type="method" value="X-ray"/>
    <property type="resolution" value="3.20 A"/>
    <property type="chains" value="O=1-89"/>
</dbReference>
<dbReference type="PDB" id="1I94">
    <property type="method" value="X-ray"/>
    <property type="resolution" value="3.20 A"/>
    <property type="chains" value="O=2-89"/>
</dbReference>
<dbReference type="PDB" id="1I95">
    <property type="method" value="X-ray"/>
    <property type="resolution" value="4.50 A"/>
    <property type="chains" value="O=2-89"/>
</dbReference>
<dbReference type="PDB" id="1I96">
    <property type="method" value="X-ray"/>
    <property type="resolution" value="4.20 A"/>
    <property type="chains" value="O=2-89"/>
</dbReference>
<dbReference type="PDB" id="1I97">
    <property type="method" value="X-ray"/>
    <property type="resolution" value="4.50 A"/>
    <property type="chains" value="O=2-89"/>
</dbReference>
<dbReference type="PDB" id="1IBK">
    <property type="method" value="X-ray"/>
    <property type="resolution" value="3.31 A"/>
    <property type="chains" value="O=1-89"/>
</dbReference>
<dbReference type="PDB" id="1IBL">
    <property type="method" value="X-ray"/>
    <property type="resolution" value="3.11 A"/>
    <property type="chains" value="O=1-89"/>
</dbReference>
<dbReference type="PDB" id="1IBM">
    <property type="method" value="X-ray"/>
    <property type="resolution" value="3.31 A"/>
    <property type="chains" value="O=1-89"/>
</dbReference>
<dbReference type="PDB" id="1J5E">
    <property type="method" value="X-ray"/>
    <property type="resolution" value="3.05 A"/>
    <property type="chains" value="O=2-89"/>
</dbReference>
<dbReference type="PDB" id="1JGO">
    <property type="method" value="X-ray"/>
    <property type="resolution" value="5.60 A"/>
    <property type="chains" value="R=1-89"/>
</dbReference>
<dbReference type="PDB" id="1JGP">
    <property type="method" value="X-ray"/>
    <property type="resolution" value="7.00 A"/>
    <property type="chains" value="R=1-89"/>
</dbReference>
<dbReference type="PDB" id="1JGQ">
    <property type="method" value="X-ray"/>
    <property type="resolution" value="5.00 A"/>
    <property type="chains" value="R=1-89"/>
</dbReference>
<dbReference type="PDB" id="1ML5">
    <property type="method" value="EM"/>
    <property type="resolution" value="14.00 A"/>
    <property type="chains" value="R=1-89"/>
</dbReference>
<dbReference type="PDB" id="1N32">
    <property type="method" value="X-ray"/>
    <property type="resolution" value="3.00 A"/>
    <property type="chains" value="O=2-89"/>
</dbReference>
<dbReference type="PDB" id="1N33">
    <property type="method" value="X-ray"/>
    <property type="resolution" value="3.35 A"/>
    <property type="chains" value="O=2-89"/>
</dbReference>
<dbReference type="PDB" id="1N34">
    <property type="method" value="X-ray"/>
    <property type="resolution" value="3.80 A"/>
    <property type="chains" value="O=2-89"/>
</dbReference>
<dbReference type="PDB" id="1N36">
    <property type="method" value="X-ray"/>
    <property type="resolution" value="3.65 A"/>
    <property type="chains" value="O=2-89"/>
</dbReference>
<dbReference type="PDB" id="1QD7">
    <property type="method" value="X-ray"/>
    <property type="resolution" value="5.50 A"/>
    <property type="chains" value="H=21-70"/>
</dbReference>
<dbReference type="PDB" id="1VVJ">
    <property type="method" value="X-ray"/>
    <property type="resolution" value="3.44 A"/>
    <property type="chains" value="QO/XO=1-89"/>
</dbReference>
<dbReference type="PDB" id="1VY4">
    <property type="method" value="X-ray"/>
    <property type="resolution" value="2.60 A"/>
    <property type="chains" value="AO/CO=1-89"/>
</dbReference>
<dbReference type="PDB" id="1VY5">
    <property type="method" value="X-ray"/>
    <property type="resolution" value="2.55 A"/>
    <property type="chains" value="AO/CO=1-89"/>
</dbReference>
<dbReference type="PDB" id="1VY6">
    <property type="method" value="X-ray"/>
    <property type="resolution" value="2.90 A"/>
    <property type="chains" value="AO/CO=1-89"/>
</dbReference>
<dbReference type="PDB" id="1VY7">
    <property type="method" value="X-ray"/>
    <property type="resolution" value="2.80 A"/>
    <property type="chains" value="AO/CO=1-89"/>
</dbReference>
<dbReference type="PDB" id="1XMO">
    <property type="method" value="X-ray"/>
    <property type="resolution" value="3.25 A"/>
    <property type="chains" value="O=1-89"/>
</dbReference>
<dbReference type="PDB" id="1XMQ">
    <property type="method" value="X-ray"/>
    <property type="resolution" value="3.00 A"/>
    <property type="chains" value="O=1-89"/>
</dbReference>
<dbReference type="PDB" id="1XNQ">
    <property type="method" value="X-ray"/>
    <property type="resolution" value="3.05 A"/>
    <property type="chains" value="O=1-89"/>
</dbReference>
<dbReference type="PDB" id="1XNR">
    <property type="method" value="X-ray"/>
    <property type="resolution" value="3.10 A"/>
    <property type="chains" value="O=1-89"/>
</dbReference>
<dbReference type="PDB" id="2E5L">
    <property type="method" value="X-ray"/>
    <property type="resolution" value="3.30 A"/>
    <property type="chains" value="O=2-89"/>
</dbReference>
<dbReference type="PDB" id="2F4V">
    <property type="method" value="X-ray"/>
    <property type="resolution" value="3.80 A"/>
    <property type="chains" value="O=1-89"/>
</dbReference>
<dbReference type="PDB" id="2HHH">
    <property type="method" value="X-ray"/>
    <property type="resolution" value="3.35 A"/>
    <property type="chains" value="O=1-89"/>
</dbReference>
<dbReference type="PDB" id="2UU9">
    <property type="method" value="X-ray"/>
    <property type="resolution" value="3.10 A"/>
    <property type="chains" value="O=2-89"/>
</dbReference>
<dbReference type="PDB" id="2UUA">
    <property type="method" value="X-ray"/>
    <property type="resolution" value="2.90 A"/>
    <property type="chains" value="O=2-89"/>
</dbReference>
<dbReference type="PDB" id="2UUB">
    <property type="method" value="X-ray"/>
    <property type="resolution" value="2.80 A"/>
    <property type="chains" value="O=2-89"/>
</dbReference>
<dbReference type="PDB" id="2UUC">
    <property type="method" value="X-ray"/>
    <property type="resolution" value="3.10 A"/>
    <property type="chains" value="O=2-89"/>
</dbReference>
<dbReference type="PDB" id="2UXB">
    <property type="method" value="X-ray"/>
    <property type="resolution" value="3.10 A"/>
    <property type="chains" value="O=2-89"/>
</dbReference>
<dbReference type="PDB" id="2UXC">
    <property type="method" value="X-ray"/>
    <property type="resolution" value="2.90 A"/>
    <property type="chains" value="O=2-89"/>
</dbReference>
<dbReference type="PDB" id="2UXD">
    <property type="method" value="X-ray"/>
    <property type="resolution" value="3.20 A"/>
    <property type="chains" value="O=2-89"/>
</dbReference>
<dbReference type="PDB" id="2VQE">
    <property type="method" value="X-ray"/>
    <property type="resolution" value="2.50 A"/>
    <property type="chains" value="O=1-89"/>
</dbReference>
<dbReference type="PDB" id="2VQF">
    <property type="method" value="X-ray"/>
    <property type="resolution" value="2.90 A"/>
    <property type="chains" value="O=1-89"/>
</dbReference>
<dbReference type="PDB" id="2ZM6">
    <property type="method" value="X-ray"/>
    <property type="resolution" value="3.30 A"/>
    <property type="chains" value="O=2-89"/>
</dbReference>
<dbReference type="PDB" id="3OTO">
    <property type="method" value="X-ray"/>
    <property type="resolution" value="3.69 A"/>
    <property type="chains" value="O=1-89"/>
</dbReference>
<dbReference type="PDB" id="3T1H">
    <property type="method" value="X-ray"/>
    <property type="resolution" value="3.11 A"/>
    <property type="chains" value="O=1-89"/>
</dbReference>
<dbReference type="PDB" id="3T1Y">
    <property type="method" value="X-ray"/>
    <property type="resolution" value="2.80 A"/>
    <property type="chains" value="O=1-89"/>
</dbReference>
<dbReference type="PDB" id="4AQY">
    <property type="method" value="X-ray"/>
    <property type="resolution" value="3.50 A"/>
    <property type="chains" value="O=2-89"/>
</dbReference>
<dbReference type="PDB" id="4B3M">
    <property type="method" value="X-ray"/>
    <property type="resolution" value="2.90 A"/>
    <property type="chains" value="O=2-89"/>
</dbReference>
<dbReference type="PDB" id="4B3R">
    <property type="method" value="X-ray"/>
    <property type="resolution" value="3.00 A"/>
    <property type="chains" value="O=2-89"/>
</dbReference>
<dbReference type="PDB" id="4B3S">
    <property type="method" value="X-ray"/>
    <property type="resolution" value="3.15 A"/>
    <property type="chains" value="O=2-89"/>
</dbReference>
<dbReference type="PDB" id="4B3T">
    <property type="method" value="X-ray"/>
    <property type="resolution" value="3.00 A"/>
    <property type="chains" value="O=2-89"/>
</dbReference>
<dbReference type="PDB" id="4DR1">
    <property type="method" value="X-ray"/>
    <property type="resolution" value="3.60 A"/>
    <property type="chains" value="O=1-89"/>
</dbReference>
<dbReference type="PDB" id="4DR2">
    <property type="method" value="X-ray"/>
    <property type="resolution" value="3.25 A"/>
    <property type="chains" value="O=1-89"/>
</dbReference>
<dbReference type="PDB" id="4DR3">
    <property type="method" value="X-ray"/>
    <property type="resolution" value="3.35 A"/>
    <property type="chains" value="O=1-89"/>
</dbReference>
<dbReference type="PDB" id="4DR4">
    <property type="method" value="X-ray"/>
    <property type="resolution" value="3.97 A"/>
    <property type="chains" value="O=1-89"/>
</dbReference>
<dbReference type="PDB" id="4DR5">
    <property type="method" value="X-ray"/>
    <property type="resolution" value="3.45 A"/>
    <property type="chains" value="O=1-89"/>
</dbReference>
<dbReference type="PDB" id="4DR6">
    <property type="method" value="X-ray"/>
    <property type="resolution" value="3.30 A"/>
    <property type="chains" value="O=1-89"/>
</dbReference>
<dbReference type="PDB" id="4DR7">
    <property type="method" value="X-ray"/>
    <property type="resolution" value="3.75 A"/>
    <property type="chains" value="O=1-89"/>
</dbReference>
<dbReference type="PDB" id="4DUY">
    <property type="method" value="X-ray"/>
    <property type="resolution" value="3.39 A"/>
    <property type="chains" value="O=1-89"/>
</dbReference>
<dbReference type="PDB" id="4DUZ">
    <property type="method" value="X-ray"/>
    <property type="resolution" value="3.65 A"/>
    <property type="chains" value="O=1-89"/>
</dbReference>
<dbReference type="PDB" id="4DV0">
    <property type="method" value="X-ray"/>
    <property type="resolution" value="3.85 A"/>
    <property type="chains" value="O=1-89"/>
</dbReference>
<dbReference type="PDB" id="4DV1">
    <property type="method" value="X-ray"/>
    <property type="resolution" value="3.85 A"/>
    <property type="chains" value="O=1-89"/>
</dbReference>
<dbReference type="PDB" id="4DV2">
    <property type="method" value="X-ray"/>
    <property type="resolution" value="3.65 A"/>
    <property type="chains" value="O=1-89"/>
</dbReference>
<dbReference type="PDB" id="4DV3">
    <property type="method" value="X-ray"/>
    <property type="resolution" value="3.55 A"/>
    <property type="chains" value="O=1-89"/>
</dbReference>
<dbReference type="PDB" id="4DV4">
    <property type="method" value="X-ray"/>
    <property type="resolution" value="3.65 A"/>
    <property type="chains" value="O=1-89"/>
</dbReference>
<dbReference type="PDB" id="4DV5">
    <property type="method" value="X-ray"/>
    <property type="resolution" value="3.68 A"/>
    <property type="chains" value="O=1-89"/>
</dbReference>
<dbReference type="PDB" id="4DV6">
    <property type="method" value="X-ray"/>
    <property type="resolution" value="3.30 A"/>
    <property type="chains" value="O=1-89"/>
</dbReference>
<dbReference type="PDB" id="4DV7">
    <property type="method" value="X-ray"/>
    <property type="resolution" value="3.29 A"/>
    <property type="chains" value="O=1-89"/>
</dbReference>
<dbReference type="PDB" id="4GKJ">
    <property type="method" value="X-ray"/>
    <property type="resolution" value="3.30 A"/>
    <property type="chains" value="O=2-89"/>
</dbReference>
<dbReference type="PDB" id="4GKK">
    <property type="method" value="X-ray"/>
    <property type="resolution" value="3.20 A"/>
    <property type="chains" value="O=2-89"/>
</dbReference>
<dbReference type="PDB" id="4JI0">
    <property type="method" value="X-ray"/>
    <property type="resolution" value="3.49 A"/>
    <property type="chains" value="O=1-89"/>
</dbReference>
<dbReference type="PDB" id="4JI1">
    <property type="method" value="X-ray"/>
    <property type="resolution" value="3.14 A"/>
    <property type="chains" value="O=1-89"/>
</dbReference>
<dbReference type="PDB" id="4JI2">
    <property type="method" value="X-ray"/>
    <property type="resolution" value="3.64 A"/>
    <property type="chains" value="O=1-89"/>
</dbReference>
<dbReference type="PDB" id="4JI3">
    <property type="method" value="X-ray"/>
    <property type="resolution" value="3.35 A"/>
    <property type="chains" value="O=1-89"/>
</dbReference>
<dbReference type="PDB" id="4JI4">
    <property type="method" value="X-ray"/>
    <property type="resolution" value="3.69 A"/>
    <property type="chains" value="O=1-89"/>
</dbReference>
<dbReference type="PDB" id="4JI5">
    <property type="method" value="X-ray"/>
    <property type="resolution" value="3.85 A"/>
    <property type="chains" value="O=1-89"/>
</dbReference>
<dbReference type="PDB" id="4JI6">
    <property type="method" value="X-ray"/>
    <property type="resolution" value="3.55 A"/>
    <property type="chains" value="O=1-89"/>
</dbReference>
<dbReference type="PDB" id="4JI7">
    <property type="method" value="X-ray"/>
    <property type="resolution" value="3.50 A"/>
    <property type="chains" value="O=1-89"/>
</dbReference>
<dbReference type="PDB" id="4JI8">
    <property type="method" value="X-ray"/>
    <property type="resolution" value="3.74 A"/>
    <property type="chains" value="O=1-89"/>
</dbReference>
<dbReference type="PDB" id="4JV5">
    <property type="method" value="X-ray"/>
    <property type="resolution" value="3.16 A"/>
    <property type="chains" value="O=2-89"/>
</dbReference>
<dbReference type="PDB" id="4JYA">
    <property type="method" value="X-ray"/>
    <property type="resolution" value="3.10 A"/>
    <property type="chains" value="O=2-89"/>
</dbReference>
<dbReference type="PDB" id="4K0K">
    <property type="method" value="X-ray"/>
    <property type="resolution" value="3.40 A"/>
    <property type="chains" value="O=2-89"/>
</dbReference>
<dbReference type="PDB" id="4KHP">
    <property type="method" value="X-ray"/>
    <property type="resolution" value="3.10 A"/>
    <property type="chains" value="O=2-89"/>
</dbReference>
<dbReference type="PDB" id="4L47">
    <property type="method" value="X-ray"/>
    <property type="resolution" value="3.22 A"/>
    <property type="chains" value="QO/XO=1-89"/>
</dbReference>
<dbReference type="PDB" id="4L71">
    <property type="method" value="X-ray"/>
    <property type="resolution" value="3.90 A"/>
    <property type="chains" value="QO/XO=1-89"/>
</dbReference>
<dbReference type="PDB" id="4LEL">
    <property type="method" value="X-ray"/>
    <property type="resolution" value="3.90 A"/>
    <property type="chains" value="QO/XO=1-89"/>
</dbReference>
<dbReference type="PDB" id="4LF4">
    <property type="method" value="X-ray"/>
    <property type="resolution" value="3.34 A"/>
    <property type="chains" value="O=1-89"/>
</dbReference>
<dbReference type="PDB" id="4LF5">
    <property type="method" value="X-ray"/>
    <property type="resolution" value="3.75 A"/>
    <property type="chains" value="O=1-89"/>
</dbReference>
<dbReference type="PDB" id="4LF6">
    <property type="method" value="X-ray"/>
    <property type="resolution" value="3.31 A"/>
    <property type="chains" value="O=1-89"/>
</dbReference>
<dbReference type="PDB" id="4LF7">
    <property type="method" value="X-ray"/>
    <property type="resolution" value="3.15 A"/>
    <property type="chains" value="O=1-89"/>
</dbReference>
<dbReference type="PDB" id="4LF8">
    <property type="method" value="X-ray"/>
    <property type="resolution" value="3.15 A"/>
    <property type="chains" value="O=1-89"/>
</dbReference>
<dbReference type="PDB" id="4LF9">
    <property type="method" value="X-ray"/>
    <property type="resolution" value="3.28 A"/>
    <property type="chains" value="O=1-89"/>
</dbReference>
<dbReference type="PDB" id="4LFA">
    <property type="method" value="X-ray"/>
    <property type="resolution" value="3.65 A"/>
    <property type="chains" value="O=1-89"/>
</dbReference>
<dbReference type="PDB" id="4LFB">
    <property type="method" value="X-ray"/>
    <property type="resolution" value="3.01 A"/>
    <property type="chains" value="O=1-89"/>
</dbReference>
<dbReference type="PDB" id="4LFC">
    <property type="method" value="X-ray"/>
    <property type="resolution" value="3.60 A"/>
    <property type="chains" value="O=1-89"/>
</dbReference>
<dbReference type="PDB" id="4LFZ">
    <property type="method" value="X-ray"/>
    <property type="resolution" value="3.92 A"/>
    <property type="chains" value="QO/XO=1-89"/>
</dbReference>
<dbReference type="PDB" id="4LNT">
    <property type="method" value="X-ray"/>
    <property type="resolution" value="2.94 A"/>
    <property type="chains" value="QO/XO=1-89"/>
</dbReference>
<dbReference type="PDB" id="4LSK">
    <property type="method" value="X-ray"/>
    <property type="resolution" value="3.48 A"/>
    <property type="chains" value="QO/XO=1-89"/>
</dbReference>
<dbReference type="PDB" id="4LT8">
    <property type="method" value="X-ray"/>
    <property type="resolution" value="3.14 A"/>
    <property type="chains" value="QO/XO=1-89"/>
</dbReference>
<dbReference type="PDB" id="4NXM">
    <property type="method" value="X-ray"/>
    <property type="resolution" value="3.65 A"/>
    <property type="chains" value="O=1-89"/>
</dbReference>
<dbReference type="PDB" id="4NXN">
    <property type="method" value="X-ray"/>
    <property type="resolution" value="3.54 A"/>
    <property type="chains" value="O=1-89"/>
</dbReference>
<dbReference type="PDB" id="4OX9">
    <property type="method" value="X-ray"/>
    <property type="resolution" value="3.80 A"/>
    <property type="chains" value="O=2-89"/>
</dbReference>
<dbReference type="PDB" id="4P6F">
    <property type="method" value="X-ray"/>
    <property type="resolution" value="3.60 A"/>
    <property type="chains" value="QO/XO=1-89"/>
</dbReference>
<dbReference type="PDB" id="4P70">
    <property type="method" value="X-ray"/>
    <property type="resolution" value="3.68 A"/>
    <property type="chains" value="QO/XO=1-89"/>
</dbReference>
<dbReference type="PDB" id="4TUA">
    <property type="method" value="X-ray"/>
    <property type="resolution" value="3.60 A"/>
    <property type="chains" value="QO/XO=1-89"/>
</dbReference>
<dbReference type="PDB" id="4TUB">
    <property type="method" value="X-ray"/>
    <property type="resolution" value="3.60 A"/>
    <property type="chains" value="QO/XO=1-89"/>
</dbReference>
<dbReference type="PDB" id="4TUC">
    <property type="method" value="X-ray"/>
    <property type="resolution" value="3.60 A"/>
    <property type="chains" value="QO/XO=1-89"/>
</dbReference>
<dbReference type="PDB" id="4TUD">
    <property type="method" value="X-ray"/>
    <property type="resolution" value="3.60 A"/>
    <property type="chains" value="QO/XO=1-89"/>
</dbReference>
<dbReference type="PDB" id="4TUE">
    <property type="method" value="X-ray"/>
    <property type="resolution" value="3.50 A"/>
    <property type="chains" value="QO/XO=1-89"/>
</dbReference>
<dbReference type="PDB" id="4V42">
    <property type="method" value="X-ray"/>
    <property type="resolution" value="5.50 A"/>
    <property type="chains" value="AR=1-89"/>
</dbReference>
<dbReference type="PDB" id="4V4A">
    <property type="method" value="X-ray"/>
    <property type="resolution" value="9.50 A"/>
    <property type="chains" value="O=2-89"/>
</dbReference>
<dbReference type="PDB" id="4V4I">
    <property type="method" value="X-ray"/>
    <property type="resolution" value="3.71 A"/>
    <property type="chains" value="p=-"/>
</dbReference>
<dbReference type="PDB" id="4V4P">
    <property type="method" value="X-ray"/>
    <property type="resolution" value="5.50 A"/>
    <property type="chains" value="BR=1-89"/>
</dbReference>
<dbReference type="PDB" id="4V4R">
    <property type="method" value="X-ray"/>
    <property type="resolution" value="5.90 A"/>
    <property type="chains" value="AO=1-89"/>
</dbReference>
<dbReference type="PDB" id="4V4S">
    <property type="method" value="X-ray"/>
    <property type="resolution" value="6.76 A"/>
    <property type="chains" value="AO=1-89"/>
</dbReference>
<dbReference type="PDB" id="4V4T">
    <property type="method" value="X-ray"/>
    <property type="resolution" value="6.46 A"/>
    <property type="chains" value="AO=1-89"/>
</dbReference>
<dbReference type="PDB" id="4V4X">
    <property type="method" value="X-ray"/>
    <property type="resolution" value="5.00 A"/>
    <property type="chains" value="AR=1-89"/>
</dbReference>
<dbReference type="PDB" id="4V4Y">
    <property type="method" value="X-ray"/>
    <property type="resolution" value="5.50 A"/>
    <property type="chains" value="AR=1-89"/>
</dbReference>
<dbReference type="PDB" id="4V4Z">
    <property type="method" value="X-ray"/>
    <property type="resolution" value="4.51 A"/>
    <property type="chains" value="AR=1-89"/>
</dbReference>
<dbReference type="PDB" id="4V51">
    <property type="method" value="X-ray"/>
    <property type="resolution" value="2.80 A"/>
    <property type="chains" value="AO/CO=2-89"/>
</dbReference>
<dbReference type="PDB" id="4V5A">
    <property type="method" value="X-ray"/>
    <property type="resolution" value="3.50 A"/>
    <property type="chains" value="AO/CO=2-89"/>
</dbReference>
<dbReference type="PDB" id="4V5C">
    <property type="method" value="X-ray"/>
    <property type="resolution" value="3.30 A"/>
    <property type="chains" value="AO/CO=1-89"/>
</dbReference>
<dbReference type="PDB" id="4V5D">
    <property type="method" value="X-ray"/>
    <property type="resolution" value="3.50 A"/>
    <property type="chains" value="AO/CO=1-89"/>
</dbReference>
<dbReference type="PDB" id="4V5E">
    <property type="method" value="X-ray"/>
    <property type="resolution" value="3.45 A"/>
    <property type="chains" value="AO/CO=1-89"/>
</dbReference>
<dbReference type="PDB" id="4V5F">
    <property type="method" value="X-ray"/>
    <property type="resolution" value="3.60 A"/>
    <property type="chains" value="AO/CO=1-89"/>
</dbReference>
<dbReference type="PDB" id="4V5G">
    <property type="method" value="X-ray"/>
    <property type="resolution" value="3.60 A"/>
    <property type="chains" value="AO/CO=1-89"/>
</dbReference>
<dbReference type="PDB" id="4V5J">
    <property type="method" value="X-ray"/>
    <property type="resolution" value="3.10 A"/>
    <property type="chains" value="AO/CO=1-89"/>
</dbReference>
<dbReference type="PDB" id="4V5K">
    <property type="method" value="X-ray"/>
    <property type="resolution" value="3.20 A"/>
    <property type="chains" value="AO/CO=1-89"/>
</dbReference>
<dbReference type="PDB" id="4V5L">
    <property type="method" value="X-ray"/>
    <property type="resolution" value="3.10 A"/>
    <property type="chains" value="AO=1-89"/>
</dbReference>
<dbReference type="PDB" id="4V5M">
    <property type="method" value="EM"/>
    <property type="resolution" value="7.80 A"/>
    <property type="chains" value="AO=1-89"/>
</dbReference>
<dbReference type="PDB" id="4V5N">
    <property type="method" value="EM"/>
    <property type="resolution" value="7.60 A"/>
    <property type="chains" value="AO=1-89"/>
</dbReference>
<dbReference type="PDB" id="4V5P">
    <property type="method" value="X-ray"/>
    <property type="resolution" value="3.10 A"/>
    <property type="chains" value="AO/CO=1-89"/>
</dbReference>
<dbReference type="PDB" id="4V5Q">
    <property type="method" value="X-ray"/>
    <property type="resolution" value="3.10 A"/>
    <property type="chains" value="AO/CO=1-89"/>
</dbReference>
<dbReference type="PDB" id="4V5R">
    <property type="method" value="X-ray"/>
    <property type="resolution" value="3.10 A"/>
    <property type="chains" value="AO/CO=1-89"/>
</dbReference>
<dbReference type="PDB" id="4V5S">
    <property type="method" value="X-ray"/>
    <property type="resolution" value="3.10 A"/>
    <property type="chains" value="AO/CO=1-89"/>
</dbReference>
<dbReference type="PDB" id="4V68">
    <property type="method" value="EM"/>
    <property type="resolution" value="6.40 A"/>
    <property type="chains" value="AO=2-89"/>
</dbReference>
<dbReference type="PDB" id="4V6A">
    <property type="method" value="X-ray"/>
    <property type="resolution" value="3.10 A"/>
    <property type="chains" value="AO/CO=1-89"/>
</dbReference>
<dbReference type="PDB" id="4V6F">
    <property type="method" value="X-ray"/>
    <property type="resolution" value="3.10 A"/>
    <property type="chains" value="BR/CR=1-89"/>
</dbReference>
<dbReference type="PDB" id="4V6G">
    <property type="method" value="X-ray"/>
    <property type="resolution" value="3.50 A"/>
    <property type="chains" value="AR/CR=1-89"/>
</dbReference>
<dbReference type="PDB" id="4V7J">
    <property type="method" value="X-ray"/>
    <property type="resolution" value="3.30 A"/>
    <property type="chains" value="Ao/Bo=1-89"/>
</dbReference>
<dbReference type="PDB" id="4V7K">
    <property type="method" value="X-ray"/>
    <property type="resolution" value="3.60 A"/>
    <property type="chains" value="Ao/Bo=1-89"/>
</dbReference>
<dbReference type="PDB" id="4V7L">
    <property type="method" value="X-ray"/>
    <property type="resolution" value="3.00 A"/>
    <property type="chains" value="AO/CO=1-89"/>
</dbReference>
<dbReference type="PDB" id="4V7M">
    <property type="method" value="X-ray"/>
    <property type="resolution" value="3.45 A"/>
    <property type="chains" value="AO/CO=1-89"/>
</dbReference>
<dbReference type="PDB" id="4V7W">
    <property type="method" value="X-ray"/>
    <property type="resolution" value="3.00 A"/>
    <property type="chains" value="AO/CO=1-89"/>
</dbReference>
<dbReference type="PDB" id="4V7X">
    <property type="method" value="X-ray"/>
    <property type="resolution" value="3.00 A"/>
    <property type="chains" value="AO/CO=1-89"/>
</dbReference>
<dbReference type="PDB" id="4V7Y">
    <property type="method" value="X-ray"/>
    <property type="resolution" value="3.00 A"/>
    <property type="chains" value="AO/CO=1-89"/>
</dbReference>
<dbReference type="PDB" id="4V7Z">
    <property type="method" value="X-ray"/>
    <property type="resolution" value="3.10 A"/>
    <property type="chains" value="AO/CO=1-89"/>
</dbReference>
<dbReference type="PDB" id="4V87">
    <property type="method" value="X-ray"/>
    <property type="resolution" value="3.10 A"/>
    <property type="chains" value="BR/CR=1-89"/>
</dbReference>
<dbReference type="PDB" id="4V8A">
    <property type="method" value="X-ray"/>
    <property type="resolution" value="3.20 A"/>
    <property type="chains" value="CO/DO=1-89"/>
</dbReference>
<dbReference type="PDB" id="4V8B">
    <property type="method" value="X-ray"/>
    <property type="resolution" value="3.00 A"/>
    <property type="chains" value="AR/CR=1-89"/>
</dbReference>
<dbReference type="PDB" id="4V8C">
    <property type="method" value="X-ray"/>
    <property type="resolution" value="3.30 A"/>
    <property type="chains" value="CR/DR=1-89"/>
</dbReference>
<dbReference type="PDB" id="4V8D">
    <property type="method" value="X-ray"/>
    <property type="resolution" value="3.00 A"/>
    <property type="chains" value="AR/CR=1-89"/>
</dbReference>
<dbReference type="PDB" id="4V8E">
    <property type="method" value="X-ray"/>
    <property type="resolution" value="3.30 A"/>
    <property type="chains" value="BR/DR=1-89"/>
</dbReference>
<dbReference type="PDB" id="4V8F">
    <property type="method" value="X-ray"/>
    <property type="resolution" value="3.30 A"/>
    <property type="chains" value="BR/CR=1-89"/>
</dbReference>
<dbReference type="PDB" id="4V8G">
    <property type="method" value="X-ray"/>
    <property type="resolution" value="3.00 A"/>
    <property type="chains" value="AO/CO=1-89"/>
</dbReference>
<dbReference type="PDB" id="4V8H">
    <property type="method" value="X-ray"/>
    <property type="resolution" value="3.10 A"/>
    <property type="chains" value="AO/CO=1-89"/>
</dbReference>
<dbReference type="PDB" id="4V8I">
    <property type="method" value="X-ray"/>
    <property type="resolution" value="2.70 A"/>
    <property type="chains" value="AO/CO=1-89"/>
</dbReference>
<dbReference type="PDB" id="4V8J">
    <property type="method" value="X-ray"/>
    <property type="resolution" value="3.90 A"/>
    <property type="chains" value="AO/CO=1-89"/>
</dbReference>
<dbReference type="PDB" id="4V8N">
    <property type="method" value="X-ray"/>
    <property type="resolution" value="3.10 A"/>
    <property type="chains" value="AO/CO=1-89"/>
</dbReference>
<dbReference type="PDB" id="4V8O">
    <property type="method" value="X-ray"/>
    <property type="resolution" value="3.80 A"/>
    <property type="chains" value="AO=1-89"/>
</dbReference>
<dbReference type="PDB" id="4V8Q">
    <property type="method" value="X-ray"/>
    <property type="resolution" value="3.10 A"/>
    <property type="chains" value="BO=1-89"/>
</dbReference>
<dbReference type="PDB" id="4V8U">
    <property type="method" value="X-ray"/>
    <property type="resolution" value="3.70 A"/>
    <property type="chains" value="AO/CO=1-89"/>
</dbReference>
<dbReference type="PDB" id="4V8X">
    <property type="method" value="X-ray"/>
    <property type="resolution" value="3.35 A"/>
    <property type="chains" value="AO/CO=1-89"/>
</dbReference>
<dbReference type="PDB" id="4V90">
    <property type="method" value="X-ray"/>
    <property type="resolution" value="2.95 A"/>
    <property type="chains" value="AO=1-89"/>
</dbReference>
<dbReference type="PDB" id="4V95">
    <property type="method" value="X-ray"/>
    <property type="resolution" value="3.20 A"/>
    <property type="chains" value="AO/CO=1-89"/>
</dbReference>
<dbReference type="PDB" id="4V97">
    <property type="method" value="X-ray"/>
    <property type="resolution" value="3.52 A"/>
    <property type="chains" value="AO/CO=1-89"/>
</dbReference>
<dbReference type="PDB" id="4V9A">
    <property type="method" value="X-ray"/>
    <property type="resolution" value="3.30 A"/>
    <property type="chains" value="AR/CR=1-89"/>
</dbReference>
<dbReference type="PDB" id="4V9B">
    <property type="method" value="X-ray"/>
    <property type="resolution" value="3.10 A"/>
    <property type="chains" value="AR/CR=1-89"/>
</dbReference>
<dbReference type="PDB" id="4V9H">
    <property type="method" value="X-ray"/>
    <property type="resolution" value="2.86 A"/>
    <property type="chains" value="AO=2-89"/>
</dbReference>
<dbReference type="PDB" id="4V9I">
    <property type="method" value="X-ray"/>
    <property type="resolution" value="3.30 A"/>
    <property type="chains" value="AO/CO=2-89"/>
</dbReference>
<dbReference type="PDB" id="4V9R">
    <property type="method" value="X-ray"/>
    <property type="resolution" value="3.00 A"/>
    <property type="chains" value="AO/CO=1-89"/>
</dbReference>
<dbReference type="PDB" id="4V9S">
    <property type="method" value="X-ray"/>
    <property type="resolution" value="3.10 A"/>
    <property type="chains" value="AO/CO=1-89"/>
</dbReference>
<dbReference type="PDB" id="4W2E">
    <property type="method" value="X-ray"/>
    <property type="resolution" value="2.90 A"/>
    <property type="chains" value="o=1-89"/>
</dbReference>
<dbReference type="PDB" id="4W2F">
    <property type="method" value="X-ray"/>
    <property type="resolution" value="2.40 A"/>
    <property type="chains" value="AO/CO=1-89"/>
</dbReference>
<dbReference type="PDB" id="4W2G">
    <property type="method" value="X-ray"/>
    <property type="resolution" value="2.55 A"/>
    <property type="chains" value="AO/CO=1-89"/>
</dbReference>
<dbReference type="PDB" id="4W2H">
    <property type="method" value="X-ray"/>
    <property type="resolution" value="2.70 A"/>
    <property type="chains" value="AO/CO=1-89"/>
</dbReference>
<dbReference type="PDB" id="4W2I">
    <property type="method" value="X-ray"/>
    <property type="resolution" value="2.70 A"/>
    <property type="chains" value="AO/CO=1-89"/>
</dbReference>
<dbReference type="PDB" id="4W4G">
    <property type="method" value="X-ray"/>
    <property type="resolution" value="3.30 A"/>
    <property type="chains" value="QO/XO=1-89"/>
</dbReference>
<dbReference type="PDB" id="4WPO">
    <property type="method" value="X-ray"/>
    <property type="resolution" value="2.80 A"/>
    <property type="chains" value="BO/DO=1-89"/>
</dbReference>
<dbReference type="PDB" id="4WQ1">
    <property type="method" value="X-ray"/>
    <property type="resolution" value="3.10 A"/>
    <property type="chains" value="6A/6I=1-89"/>
</dbReference>
<dbReference type="PDB" id="4WQF">
    <property type="method" value="X-ray"/>
    <property type="resolution" value="2.80 A"/>
    <property type="chains" value="BO/DO=1-89"/>
</dbReference>
<dbReference type="PDB" id="4WQR">
    <property type="method" value="X-ray"/>
    <property type="resolution" value="3.15 A"/>
    <property type="chains" value="6A/6I=1-89"/>
</dbReference>
<dbReference type="PDB" id="4WQU">
    <property type="method" value="X-ray"/>
    <property type="resolution" value="2.80 A"/>
    <property type="chains" value="BO/DO=1-89"/>
</dbReference>
<dbReference type="PDB" id="4WQY">
    <property type="method" value="X-ray"/>
    <property type="resolution" value="2.80 A"/>
    <property type="chains" value="BO/DO=1-89"/>
</dbReference>
<dbReference type="PDB" id="4WR6">
    <property type="method" value="X-ray"/>
    <property type="resolution" value="3.05 A"/>
    <property type="chains" value="6A/6I=1-89"/>
</dbReference>
<dbReference type="PDB" id="4WRA">
    <property type="method" value="X-ray"/>
    <property type="resolution" value="3.05 A"/>
    <property type="chains" value="6A/6I=1-89"/>
</dbReference>
<dbReference type="PDB" id="4WRO">
    <property type="method" value="X-ray"/>
    <property type="resolution" value="3.05 A"/>
    <property type="chains" value="6I=1-89"/>
</dbReference>
<dbReference type="PDB" id="4WSD">
    <property type="method" value="X-ray"/>
    <property type="resolution" value="2.95 A"/>
    <property type="chains" value="6A/6I=1-89"/>
</dbReference>
<dbReference type="PDB" id="4WSM">
    <property type="method" value="X-ray"/>
    <property type="resolution" value="3.30 A"/>
    <property type="chains" value="6A/6I=1-89"/>
</dbReference>
<dbReference type="PDB" id="4WT1">
    <property type="method" value="X-ray"/>
    <property type="resolution" value="3.05 A"/>
    <property type="chains" value="6A/6I=1-89"/>
</dbReference>
<dbReference type="PDB" id="4WT8">
    <property type="method" value="X-ray"/>
    <property type="resolution" value="3.40 A"/>
    <property type="chains" value="AO/BO=2-89"/>
</dbReference>
<dbReference type="PDB" id="4WU1">
    <property type="method" value="X-ray"/>
    <property type="resolution" value="3.20 A"/>
    <property type="chains" value="6A/6I=1-89"/>
</dbReference>
<dbReference type="PDB" id="4WZD">
    <property type="method" value="X-ray"/>
    <property type="resolution" value="3.10 A"/>
    <property type="chains" value="6A/6I=1-89"/>
</dbReference>
<dbReference type="PDB" id="4WZO">
    <property type="method" value="X-ray"/>
    <property type="resolution" value="3.30 A"/>
    <property type="chains" value="6A/6I=1-89"/>
</dbReference>
<dbReference type="PDB" id="4X62">
    <property type="method" value="X-ray"/>
    <property type="resolution" value="3.45 A"/>
    <property type="chains" value="O=2-89"/>
</dbReference>
<dbReference type="PDB" id="4X64">
    <property type="method" value="X-ray"/>
    <property type="resolution" value="3.35 A"/>
    <property type="chains" value="O=2-89"/>
</dbReference>
<dbReference type="PDB" id="4X65">
    <property type="method" value="X-ray"/>
    <property type="resolution" value="3.35 A"/>
    <property type="chains" value="O=2-89"/>
</dbReference>
<dbReference type="PDB" id="4X66">
    <property type="method" value="X-ray"/>
    <property type="resolution" value="3.45 A"/>
    <property type="chains" value="O=2-89"/>
</dbReference>
<dbReference type="PDB" id="4Y4O">
    <property type="method" value="X-ray"/>
    <property type="resolution" value="2.30 A"/>
    <property type="chains" value="1o/2o=1-89"/>
</dbReference>
<dbReference type="PDB" id="4Y4P">
    <property type="method" value="X-ray"/>
    <property type="resolution" value="2.50 A"/>
    <property type="chains" value="1o/2o=1-89"/>
</dbReference>
<dbReference type="PDB" id="4YHH">
    <property type="method" value="X-ray"/>
    <property type="resolution" value="3.42 A"/>
    <property type="chains" value="O=2-89"/>
</dbReference>
<dbReference type="PDB" id="4YPB">
    <property type="method" value="X-ray"/>
    <property type="resolution" value="3.40 A"/>
    <property type="chains" value="QO/XO=1-89"/>
</dbReference>
<dbReference type="PDB" id="4YY3">
    <property type="method" value="X-ray"/>
    <property type="resolution" value="3.60 A"/>
    <property type="chains" value="O=1-89"/>
</dbReference>
<dbReference type="PDB" id="4YZV">
    <property type="method" value="X-ray"/>
    <property type="resolution" value="3.10 A"/>
    <property type="chains" value="QO/XO=1-89"/>
</dbReference>
<dbReference type="PDB" id="4Z3S">
    <property type="method" value="X-ray"/>
    <property type="resolution" value="2.65 A"/>
    <property type="chains" value="1o/2o=1-89"/>
</dbReference>
<dbReference type="PDB" id="4Z8C">
    <property type="method" value="X-ray"/>
    <property type="resolution" value="2.90 A"/>
    <property type="chains" value="1o/2o=1-89"/>
</dbReference>
<dbReference type="PDB" id="4ZER">
    <property type="method" value="X-ray"/>
    <property type="resolution" value="3.10 A"/>
    <property type="chains" value="1o/2o=2-89"/>
</dbReference>
<dbReference type="PDB" id="4ZSN">
    <property type="method" value="X-ray"/>
    <property type="resolution" value="3.60 A"/>
    <property type="chains" value="QO/XO=1-89"/>
</dbReference>
<dbReference type="PDB" id="5A9Z">
    <property type="method" value="EM"/>
    <property type="resolution" value="4.70 A"/>
    <property type="chains" value="BS=2-89"/>
</dbReference>
<dbReference type="PDB" id="5AA0">
    <property type="method" value="EM"/>
    <property type="resolution" value="5.00 A"/>
    <property type="chains" value="BS=2-89"/>
</dbReference>
<dbReference type="PDB" id="5BR8">
    <property type="method" value="X-ray"/>
    <property type="resolution" value="3.40 A"/>
    <property type="chains" value="O=1-89"/>
</dbReference>
<dbReference type="PDB" id="5CZP">
    <property type="method" value="X-ray"/>
    <property type="resolution" value="3.30 A"/>
    <property type="chains" value="QO/XO=1-89"/>
</dbReference>
<dbReference type="PDB" id="5D8B">
    <property type="method" value="X-ray"/>
    <property type="resolution" value="3.63 A"/>
    <property type="chains" value="LC/PA=1-89"/>
</dbReference>
<dbReference type="PDB" id="5DFE">
    <property type="method" value="X-ray"/>
    <property type="resolution" value="3.10 A"/>
    <property type="chains" value="QO/XO=1-89"/>
</dbReference>
<dbReference type="PDB" id="5DOX">
    <property type="method" value="X-ray"/>
    <property type="resolution" value="3.10 A"/>
    <property type="chains" value="1o/2o=1-89"/>
</dbReference>
<dbReference type="PDB" id="5DOY">
    <property type="method" value="X-ray"/>
    <property type="resolution" value="2.60 A"/>
    <property type="chains" value="1o/2o=1-89"/>
</dbReference>
<dbReference type="PDB" id="5E7K">
    <property type="method" value="X-ray"/>
    <property type="resolution" value="3.20 A"/>
    <property type="chains" value="6A/6I=1-89"/>
</dbReference>
<dbReference type="PDB" id="5E81">
    <property type="method" value="X-ray"/>
    <property type="resolution" value="2.95 A"/>
    <property type="chains" value="6A/6I=1-89"/>
</dbReference>
<dbReference type="PDB" id="5EL4">
    <property type="method" value="X-ray"/>
    <property type="resolution" value="3.15 A"/>
    <property type="chains" value="6A/6I=1-89"/>
</dbReference>
<dbReference type="PDB" id="5EL5">
    <property type="method" value="X-ray"/>
    <property type="resolution" value="3.15 A"/>
    <property type="chains" value="6A/6I=1-89"/>
</dbReference>
<dbReference type="PDB" id="5EL6">
    <property type="method" value="X-ray"/>
    <property type="resolution" value="3.10 A"/>
    <property type="chains" value="6A/6I=1-89"/>
</dbReference>
<dbReference type="PDB" id="5EL7">
    <property type="method" value="X-ray"/>
    <property type="resolution" value="3.15 A"/>
    <property type="chains" value="6A/6I=1-89"/>
</dbReference>
<dbReference type="PDB" id="5F8K">
    <property type="method" value="X-ray"/>
    <property type="resolution" value="2.80 A"/>
    <property type="chains" value="1o/2o=2-89"/>
</dbReference>
<dbReference type="PDB" id="5FDU">
    <property type="method" value="X-ray"/>
    <property type="resolution" value="2.90 A"/>
    <property type="chains" value="1o/2o=2-89"/>
</dbReference>
<dbReference type="PDB" id="5FDV">
    <property type="method" value="X-ray"/>
    <property type="resolution" value="2.80 A"/>
    <property type="chains" value="1o/2o=2-89"/>
</dbReference>
<dbReference type="PDB" id="5HAU">
    <property type="method" value="X-ray"/>
    <property type="resolution" value="3.00 A"/>
    <property type="chains" value="1o/2o=1-89"/>
</dbReference>
<dbReference type="PDB" id="5HCP">
    <property type="method" value="X-ray"/>
    <property type="resolution" value="2.89 A"/>
    <property type="chains" value="1o/2o=1-89"/>
</dbReference>
<dbReference type="PDB" id="5HCQ">
    <property type="method" value="X-ray"/>
    <property type="resolution" value="2.80 A"/>
    <property type="chains" value="1o/2o=1-89"/>
</dbReference>
<dbReference type="PDB" id="5HCR">
    <property type="method" value="X-ray"/>
    <property type="resolution" value="2.80 A"/>
    <property type="chains" value="1o/2o=1-89"/>
</dbReference>
<dbReference type="PDB" id="5HD1">
    <property type="method" value="X-ray"/>
    <property type="resolution" value="2.70 A"/>
    <property type="chains" value="1o/2o=1-89"/>
</dbReference>
<dbReference type="PDB" id="5IB7">
    <property type="method" value="X-ray"/>
    <property type="resolution" value="2.99 A"/>
    <property type="chains" value="6A/6I=1-89"/>
</dbReference>
<dbReference type="PDB" id="5IB8">
    <property type="method" value="X-ray"/>
    <property type="resolution" value="3.13 A"/>
    <property type="chains" value="6A/6I=1-89"/>
</dbReference>
<dbReference type="PDB" id="5IBB">
    <property type="method" value="X-ray"/>
    <property type="resolution" value="2.96 A"/>
    <property type="chains" value="6A/6I=1-89"/>
</dbReference>
<dbReference type="PDB" id="5IMQ">
    <property type="method" value="EM"/>
    <property type="resolution" value="3.80 A"/>
    <property type="chains" value="S=1-89"/>
</dbReference>
<dbReference type="PDB" id="5IMR">
    <property type="method" value="EM"/>
    <property type="chains" value="S=1-89"/>
</dbReference>
<dbReference type="PDB" id="5IWA">
    <property type="method" value="X-ray"/>
    <property type="resolution" value="3.50 A"/>
    <property type="chains" value="O=2-89"/>
</dbReference>
<dbReference type="PDB" id="5J30">
    <property type="method" value="X-ray"/>
    <property type="resolution" value="3.20 A"/>
    <property type="chains" value="QO/XO=1-89"/>
</dbReference>
<dbReference type="PDB" id="5J3C">
    <property type="method" value="X-ray"/>
    <property type="resolution" value="3.04 A"/>
    <property type="chains" value="QO/XO=1-89"/>
</dbReference>
<dbReference type="PDB" id="5J4B">
    <property type="method" value="X-ray"/>
    <property type="resolution" value="2.60 A"/>
    <property type="chains" value="1o/2o=1-89"/>
</dbReference>
<dbReference type="PDB" id="5J4C">
    <property type="method" value="X-ray"/>
    <property type="resolution" value="2.80 A"/>
    <property type="chains" value="1o/2o=1-89"/>
</dbReference>
<dbReference type="PDB" id="5J8B">
    <property type="method" value="X-ray"/>
    <property type="resolution" value="2.60 A"/>
    <property type="chains" value="o=1-89"/>
</dbReference>
<dbReference type="PDB" id="5LMN">
    <property type="method" value="EM"/>
    <property type="resolution" value="3.55 A"/>
    <property type="chains" value="O=1-89"/>
</dbReference>
<dbReference type="PDB" id="5LMO">
    <property type="method" value="EM"/>
    <property type="resolution" value="4.30 A"/>
    <property type="chains" value="O=1-89"/>
</dbReference>
<dbReference type="PDB" id="5LMP">
    <property type="method" value="EM"/>
    <property type="resolution" value="5.35 A"/>
    <property type="chains" value="O=1-89"/>
</dbReference>
<dbReference type="PDB" id="5LMQ">
    <property type="method" value="EM"/>
    <property type="resolution" value="4.20 A"/>
    <property type="chains" value="O=1-89"/>
</dbReference>
<dbReference type="PDB" id="5LMR">
    <property type="method" value="EM"/>
    <property type="resolution" value="4.45 A"/>
    <property type="chains" value="O=1-89"/>
</dbReference>
<dbReference type="PDB" id="5LMS">
    <property type="method" value="EM"/>
    <property type="resolution" value="5.10 A"/>
    <property type="chains" value="O=1-89"/>
</dbReference>
<dbReference type="PDB" id="5LMT">
    <property type="method" value="EM"/>
    <property type="resolution" value="4.15 A"/>
    <property type="chains" value="O=1-89"/>
</dbReference>
<dbReference type="PDB" id="5LMU">
    <property type="method" value="EM"/>
    <property type="resolution" value="4.00 A"/>
    <property type="chains" value="O=1-89"/>
</dbReference>
<dbReference type="PDB" id="5LMV">
    <property type="method" value="EM"/>
    <property type="resolution" value="4.90 A"/>
    <property type="chains" value="O=1-89"/>
</dbReference>
<dbReference type="PDB" id="5NDJ">
    <property type="method" value="X-ray"/>
    <property type="resolution" value="3.15 A"/>
    <property type="chains" value="6A/6I=1-89"/>
</dbReference>
<dbReference type="PDB" id="5NDK">
    <property type="method" value="X-ray"/>
    <property type="resolution" value="2.95 A"/>
    <property type="chains" value="6A/6I=1-89"/>
</dbReference>
<dbReference type="PDB" id="5OT7">
    <property type="method" value="EM"/>
    <property type="resolution" value="3.80 A"/>
    <property type="chains" value="N=2-89"/>
</dbReference>
<dbReference type="PDB" id="5UQ7">
    <property type="method" value="EM"/>
    <property type="resolution" value="3.50 A"/>
    <property type="chains" value="o=2-89"/>
</dbReference>
<dbReference type="PDB" id="5UQ8">
    <property type="method" value="EM"/>
    <property type="resolution" value="3.20 A"/>
    <property type="chains" value="o=2-89"/>
</dbReference>
<dbReference type="PDB" id="5VP2">
    <property type="method" value="X-ray"/>
    <property type="resolution" value="2.80 A"/>
    <property type="chains" value="1o/2o=1-89"/>
</dbReference>
<dbReference type="PDB" id="5VPO">
    <property type="method" value="X-ray"/>
    <property type="resolution" value="3.34 A"/>
    <property type="chains" value="QO/XO=1-89"/>
</dbReference>
<dbReference type="PDB" id="5VPP">
    <property type="method" value="X-ray"/>
    <property type="resolution" value="3.90 A"/>
    <property type="chains" value="QO/XO=1-89"/>
</dbReference>
<dbReference type="PDB" id="5W4K">
    <property type="method" value="X-ray"/>
    <property type="resolution" value="2.70 A"/>
    <property type="chains" value="1o/2o=1-89"/>
</dbReference>
<dbReference type="PDB" id="5WIS">
    <property type="method" value="X-ray"/>
    <property type="resolution" value="2.70 A"/>
    <property type="chains" value="1o/2o=1-89"/>
</dbReference>
<dbReference type="PDB" id="5WIT">
    <property type="method" value="X-ray"/>
    <property type="resolution" value="2.60 A"/>
    <property type="chains" value="1o/2o=1-89"/>
</dbReference>
<dbReference type="PDB" id="5WNP">
    <property type="method" value="X-ray"/>
    <property type="resolution" value="3.30 A"/>
    <property type="chains" value="O=2-89"/>
</dbReference>
<dbReference type="PDB" id="5WNQ">
    <property type="method" value="X-ray"/>
    <property type="resolution" value="3.50 A"/>
    <property type="chains" value="O=2-88"/>
</dbReference>
<dbReference type="PDB" id="5WNR">
    <property type="method" value="X-ray"/>
    <property type="resolution" value="3.50 A"/>
    <property type="chains" value="O=2-88"/>
</dbReference>
<dbReference type="PDB" id="5WNS">
    <property type="method" value="X-ray"/>
    <property type="resolution" value="3.50 A"/>
    <property type="chains" value="O=2-88"/>
</dbReference>
<dbReference type="PDB" id="5WNT">
    <property type="method" value="X-ray"/>
    <property type="resolution" value="3.30 A"/>
    <property type="chains" value="O=2-89"/>
</dbReference>
<dbReference type="PDB" id="5WNU">
    <property type="method" value="X-ray"/>
    <property type="resolution" value="3.40 A"/>
    <property type="chains" value="O=2-89"/>
</dbReference>
<dbReference type="PDB" id="5WNV">
    <property type="method" value="X-ray"/>
    <property type="resolution" value="3.30 A"/>
    <property type="chains" value="O=2-89"/>
</dbReference>
<dbReference type="PDB" id="5ZLU">
    <property type="method" value="EM"/>
    <property type="resolution" value="3.60 A"/>
    <property type="chains" value="T=1-89"/>
</dbReference>
<dbReference type="PDB" id="6BUW">
    <property type="method" value="X-ray"/>
    <property type="resolution" value="3.50 A"/>
    <property type="chains" value="QO/XO=1-89"/>
</dbReference>
<dbReference type="PDB" id="6BZ6">
    <property type="method" value="X-ray"/>
    <property type="resolution" value="3.18 A"/>
    <property type="chains" value="QO/XO=1-89"/>
</dbReference>
<dbReference type="PDB" id="6BZ7">
    <property type="method" value="X-ray"/>
    <property type="resolution" value="3.68 A"/>
    <property type="chains" value="QO/XO=1-89"/>
</dbReference>
<dbReference type="PDB" id="6BZ8">
    <property type="method" value="X-ray"/>
    <property type="resolution" value="3.74 A"/>
    <property type="chains" value="QO/XO=1-89"/>
</dbReference>
<dbReference type="PDB" id="6C5L">
    <property type="method" value="X-ray"/>
    <property type="resolution" value="3.20 A"/>
    <property type="chains" value="AO/CO=1-89"/>
</dbReference>
<dbReference type="PDB" id="6CAE">
    <property type="method" value="X-ray"/>
    <property type="resolution" value="2.60 A"/>
    <property type="chains" value="1o/2o=1-89"/>
</dbReference>
<dbReference type="PDB" id="6CAO">
    <property type="method" value="X-ray"/>
    <property type="resolution" value="3.45 A"/>
    <property type="chains" value="O=2-89"/>
</dbReference>
<dbReference type="PDB" id="6CAP">
    <property type="method" value="X-ray"/>
    <property type="resolution" value="3.40 A"/>
    <property type="chains" value="O=2-88"/>
</dbReference>
<dbReference type="PDB" id="6CAQ">
    <property type="method" value="X-ray"/>
    <property type="resolution" value="3.40 A"/>
    <property type="chains" value="O=2-88"/>
</dbReference>
<dbReference type="PDB" id="6CAR">
    <property type="method" value="X-ray"/>
    <property type="resolution" value="3.40 A"/>
    <property type="chains" value="O=2-89"/>
</dbReference>
<dbReference type="PDB" id="6CAS">
    <property type="method" value="X-ray"/>
    <property type="resolution" value="3.50 A"/>
    <property type="chains" value="O=2-89"/>
</dbReference>
<dbReference type="PDB" id="6CFJ">
    <property type="method" value="X-ray"/>
    <property type="resolution" value="2.80 A"/>
    <property type="chains" value="1o/2o=1-89"/>
</dbReference>
<dbReference type="PDB" id="6CFK">
    <property type="method" value="X-ray"/>
    <property type="resolution" value="2.70 A"/>
    <property type="chains" value="1o/2o=1-89"/>
</dbReference>
<dbReference type="PDB" id="6CFL">
    <property type="method" value="X-ray"/>
    <property type="resolution" value="2.60 A"/>
    <property type="chains" value="1o/2o=1-89"/>
</dbReference>
<dbReference type="PDB" id="6CZR">
    <property type="method" value="X-ray"/>
    <property type="resolution" value="3.14 A"/>
    <property type="chains" value="1o/2o=2-89"/>
</dbReference>
<dbReference type="PDB" id="6DTI">
    <property type="method" value="X-ray"/>
    <property type="resolution" value="3.54 A"/>
    <property type="chains" value="O=1-89"/>
</dbReference>
<dbReference type="PDB" id="6FKR">
    <property type="method" value="X-ray"/>
    <property type="resolution" value="3.20 A"/>
    <property type="chains" value="1o/2o=2-89"/>
</dbReference>
<dbReference type="PDB" id="6GSJ">
    <property type="method" value="X-ray"/>
    <property type="resolution" value="2.96 A"/>
    <property type="chains" value="6A/6I=1-89"/>
</dbReference>
<dbReference type="PDB" id="6GSK">
    <property type="method" value="X-ray"/>
    <property type="resolution" value="3.36 A"/>
    <property type="chains" value="6A/6I=1-89"/>
</dbReference>
<dbReference type="PDB" id="6GSL">
    <property type="method" value="X-ray"/>
    <property type="resolution" value="3.16 A"/>
    <property type="chains" value="6A/6I=1-89"/>
</dbReference>
<dbReference type="PDB" id="6GZQ">
    <property type="method" value="EM"/>
    <property type="resolution" value="3.28 A"/>
    <property type="chains" value="O2=2-89"/>
</dbReference>
<dbReference type="PDB" id="6GZX">
    <property type="method" value="EM"/>
    <property type="resolution" value="4.57 A"/>
    <property type="chains" value="O3/O4=2-89"/>
</dbReference>
<dbReference type="PDB" id="6GZZ">
    <property type="method" value="EM"/>
    <property type="resolution" value="4.13 A"/>
    <property type="chains" value="O3/O4=2-89"/>
</dbReference>
<dbReference type="PDB" id="6MKN">
    <property type="method" value="X-ray"/>
    <property type="resolution" value="3.46 A"/>
    <property type="chains" value="O=1-89"/>
</dbReference>
<dbReference type="PDB" id="6MPF">
    <property type="method" value="X-ray"/>
    <property type="resolution" value="3.33 A"/>
    <property type="chains" value="O=2-89"/>
</dbReference>
<dbReference type="PDB" id="6MPI">
    <property type="method" value="X-ray"/>
    <property type="resolution" value="3.33 A"/>
    <property type="chains" value="O=1-89"/>
</dbReference>
<dbReference type="PDB" id="6N9E">
    <property type="method" value="X-ray"/>
    <property type="resolution" value="3.70 A"/>
    <property type="chains" value="1o/2o=1-89"/>
</dbReference>
<dbReference type="PDB" id="6N9F">
    <property type="method" value="X-ray"/>
    <property type="resolution" value="3.70 A"/>
    <property type="chains" value="1o/2o=1-89"/>
</dbReference>
<dbReference type="PDB" id="6ND5">
    <property type="method" value="X-ray"/>
    <property type="resolution" value="2.60 A"/>
    <property type="chains" value="1o/2o=1-89"/>
</dbReference>
<dbReference type="PDB" id="6ND6">
    <property type="method" value="X-ray"/>
    <property type="resolution" value="2.85 A"/>
    <property type="chains" value="1o/2o=1-89"/>
</dbReference>
<dbReference type="PDB" id="6NDK">
    <property type="method" value="X-ray"/>
    <property type="resolution" value="3.64 A"/>
    <property type="chains" value="QO/XO=1-89"/>
</dbReference>
<dbReference type="PDB" id="6NSH">
    <property type="method" value="X-ray"/>
    <property type="resolution" value="3.40 A"/>
    <property type="chains" value="QO/XO=1-89"/>
</dbReference>
<dbReference type="PDB" id="6NTA">
    <property type="method" value="X-ray"/>
    <property type="resolution" value="3.10 A"/>
    <property type="chains" value="QO/XO=1-89"/>
</dbReference>
<dbReference type="PDB" id="6NUO">
    <property type="method" value="X-ray"/>
    <property type="resolution" value="3.20 A"/>
    <property type="chains" value="QO/XO=1-89"/>
</dbReference>
<dbReference type="PDB" id="6NWY">
    <property type="method" value="X-ray"/>
    <property type="resolution" value="3.50 A"/>
    <property type="chains" value="QO/XO=1-89"/>
</dbReference>
<dbReference type="PDB" id="6NY6">
    <property type="method" value="X-ray"/>
    <property type="resolution" value="3.74 A"/>
    <property type="chains" value="O=1-89"/>
</dbReference>
<dbReference type="PDB" id="6O3M">
    <property type="method" value="X-ray"/>
    <property type="resolution" value="3.97 A"/>
    <property type="chains" value="QO/XO=1-89"/>
</dbReference>
<dbReference type="PDB" id="6O97">
    <property type="method" value="X-ray"/>
    <property type="resolution" value="2.75 A"/>
    <property type="chains" value="1o/2o=1-89"/>
</dbReference>
<dbReference type="PDB" id="6OF1">
    <property type="method" value="X-ray"/>
    <property type="resolution" value="2.80 A"/>
    <property type="chains" value="1o/2o=1-89"/>
</dbReference>
<dbReference type="PDB" id="6OF6">
    <property type="method" value="X-ray"/>
    <property type="resolution" value="3.20 A"/>
    <property type="chains" value="QO/XO=1-89"/>
</dbReference>
<dbReference type="PDB" id="6OJ2">
    <property type="method" value="X-ray"/>
    <property type="resolution" value="3.20 A"/>
    <property type="chains" value="QO/XO=1-89"/>
</dbReference>
<dbReference type="PDB" id="6OPE">
    <property type="method" value="X-ray"/>
    <property type="resolution" value="3.10 A"/>
    <property type="chains" value="QO/XO=1-89"/>
</dbReference>
<dbReference type="PDB" id="6ORD">
    <property type="method" value="X-ray"/>
    <property type="resolution" value="3.10 A"/>
    <property type="chains" value="QO/XO=1-89"/>
</dbReference>
<dbReference type="PDB" id="6OSI">
    <property type="method" value="X-ray"/>
    <property type="resolution" value="4.14 A"/>
    <property type="chains" value="QO/XO=1-89"/>
</dbReference>
<dbReference type="PDB" id="6OTR">
    <property type="method" value="X-ray"/>
    <property type="resolution" value="3.12 A"/>
    <property type="chains" value="QO/XO=1-89"/>
</dbReference>
<dbReference type="PDB" id="6OXA">
    <property type="method" value="X-ray"/>
    <property type="resolution" value="3.25 A"/>
    <property type="chains" value="QO/XO=1-89"/>
</dbReference>
<dbReference type="PDB" id="6OXI">
    <property type="method" value="X-ray"/>
    <property type="resolution" value="3.50 A"/>
    <property type="chains" value="QO/XO=1-89"/>
</dbReference>
<dbReference type="PDB" id="6Q95">
    <property type="method" value="EM"/>
    <property type="resolution" value="3.70 A"/>
    <property type="chains" value="t=2-89"/>
</dbReference>
<dbReference type="PDB" id="6QNQ">
    <property type="method" value="X-ray"/>
    <property type="resolution" value="3.50 A"/>
    <property type="chains" value="6A/6I=1-89"/>
</dbReference>
<dbReference type="PDB" id="6QNR">
    <property type="method" value="X-ray"/>
    <property type="resolution" value="3.10 A"/>
    <property type="chains" value="6A/6I=1-89"/>
</dbReference>
<dbReference type="PDB" id="6UCQ">
    <property type="method" value="X-ray"/>
    <property type="resolution" value="3.50 A"/>
    <property type="chains" value="1o/2o=1-89"/>
</dbReference>
<dbReference type="PDB" id="6UO1">
    <property type="method" value="X-ray"/>
    <property type="resolution" value="2.95 A"/>
    <property type="chains" value="1o/2o=1-89"/>
</dbReference>
<dbReference type="PDB" id="6XHV">
    <property type="method" value="X-ray"/>
    <property type="resolution" value="2.40 A"/>
    <property type="chains" value="1o/2o=1-89"/>
</dbReference>
<dbReference type="PDB" id="6XHW">
    <property type="method" value="X-ray"/>
    <property type="resolution" value="2.50 A"/>
    <property type="chains" value="1o/2o=1-89"/>
</dbReference>
<dbReference type="PDB" id="6XHX">
    <property type="method" value="X-ray"/>
    <property type="resolution" value="2.55 A"/>
    <property type="chains" value="1o/2o=1-89"/>
</dbReference>
<dbReference type="PDB" id="6XHY">
    <property type="method" value="X-ray"/>
    <property type="resolution" value="2.60 A"/>
    <property type="chains" value="1o/2o=1-89"/>
</dbReference>
<dbReference type="PDB" id="6XQD">
    <property type="method" value="X-ray"/>
    <property type="resolution" value="2.80 A"/>
    <property type="chains" value="1o/2o=1-89"/>
</dbReference>
<dbReference type="PDB" id="6XQE">
    <property type="method" value="X-ray"/>
    <property type="resolution" value="3.00 A"/>
    <property type="chains" value="1o/2o=1-89"/>
</dbReference>
<dbReference type="PDB" id="7AZO">
    <property type="method" value="X-ray"/>
    <property type="resolution" value="3.30 A"/>
    <property type="chains" value="S15A/S15B=1-89"/>
</dbReference>
<dbReference type="PDB" id="7AZS">
    <property type="method" value="X-ray"/>
    <property type="resolution" value="3.10 A"/>
    <property type="chains" value="S15A/S15B=1-89"/>
</dbReference>
<dbReference type="PDB" id="7DUG">
    <property type="method" value="X-ray"/>
    <property type="resolution" value="3.75 A"/>
    <property type="chains" value="O=1-89"/>
</dbReference>
<dbReference type="PDB" id="7DUH">
    <property type="method" value="X-ray"/>
    <property type="resolution" value="3.75 A"/>
    <property type="chains" value="O=1-89"/>
</dbReference>
<dbReference type="PDB" id="7DUI">
    <property type="method" value="X-ray"/>
    <property type="resolution" value="3.62 A"/>
    <property type="chains" value="O=1-89"/>
</dbReference>
<dbReference type="PDB" id="7DUJ">
    <property type="method" value="X-ray"/>
    <property type="resolution" value="3.75 A"/>
    <property type="chains" value="O=1-89"/>
</dbReference>
<dbReference type="PDB" id="7DUK">
    <property type="method" value="X-ray"/>
    <property type="resolution" value="3.60 A"/>
    <property type="chains" value="O=1-89"/>
</dbReference>
<dbReference type="PDB" id="7DUL">
    <property type="method" value="X-ray"/>
    <property type="resolution" value="3.62 A"/>
    <property type="chains" value="O=1-89"/>
</dbReference>
<dbReference type="PDB" id="7JQL">
    <property type="method" value="X-ray"/>
    <property type="resolution" value="3.00 A"/>
    <property type="chains" value="1o/2o=1-89"/>
</dbReference>
<dbReference type="PDB" id="7JQM">
    <property type="method" value="X-ray"/>
    <property type="resolution" value="3.05 A"/>
    <property type="chains" value="1o/2o=1-89"/>
</dbReference>
<dbReference type="PDB" id="7LH5">
    <property type="method" value="X-ray"/>
    <property type="resolution" value="3.27 A"/>
    <property type="chains" value="AO/CO=1-89"/>
</dbReference>
<dbReference type="PDB" id="7MD7">
    <property type="method" value="X-ray"/>
    <property type="resolution" value="2.80 A"/>
    <property type="chains" value="1o/2o=1-89"/>
</dbReference>
<dbReference type="PDB" id="7RQ8">
    <property type="method" value="X-ray"/>
    <property type="resolution" value="2.50 A"/>
    <property type="chains" value="1o/2o=1-89"/>
</dbReference>
<dbReference type="PDB" id="7RQ9">
    <property type="method" value="X-ray"/>
    <property type="resolution" value="2.60 A"/>
    <property type="chains" value="1o/2o=1-89"/>
</dbReference>
<dbReference type="PDB" id="7RQA">
    <property type="method" value="X-ray"/>
    <property type="resolution" value="2.40 A"/>
    <property type="chains" value="1o/2o=1-89"/>
</dbReference>
<dbReference type="PDB" id="7RQB">
    <property type="method" value="X-ray"/>
    <property type="resolution" value="2.45 A"/>
    <property type="chains" value="1o/2o=1-89"/>
</dbReference>
<dbReference type="PDB" id="7RQC">
    <property type="method" value="X-ray"/>
    <property type="resolution" value="2.50 A"/>
    <property type="chains" value="1o/2o=1-89"/>
</dbReference>
<dbReference type="PDB" id="7RQD">
    <property type="method" value="X-ray"/>
    <property type="resolution" value="2.50 A"/>
    <property type="chains" value="1o/2o=1-89"/>
</dbReference>
<dbReference type="PDB" id="7RQE">
    <property type="method" value="X-ray"/>
    <property type="resolution" value="2.40 A"/>
    <property type="chains" value="1o/2o=1-89"/>
</dbReference>
<dbReference type="PDB" id="7U2H">
    <property type="method" value="X-ray"/>
    <property type="resolution" value="2.55 A"/>
    <property type="chains" value="1o/2o=1-89"/>
</dbReference>
<dbReference type="PDB" id="7U2I">
    <property type="method" value="X-ray"/>
    <property type="resolution" value="2.55 A"/>
    <property type="chains" value="1o/2o=1-89"/>
</dbReference>
<dbReference type="PDB" id="7U2J">
    <property type="method" value="X-ray"/>
    <property type="resolution" value="2.55 A"/>
    <property type="chains" value="1o/2o=1-89"/>
</dbReference>
<dbReference type="PDB" id="7V2L">
    <property type="method" value="EM"/>
    <property type="resolution" value="3.30 A"/>
    <property type="chains" value="O=1-89"/>
</dbReference>
<dbReference type="PDB" id="7V2M">
    <property type="method" value="EM"/>
    <property type="resolution" value="3.40 A"/>
    <property type="chains" value="O=1-89"/>
</dbReference>
<dbReference type="PDB" id="7V2N">
    <property type="method" value="EM"/>
    <property type="resolution" value="3.60 A"/>
    <property type="chains" value="O=1-89"/>
</dbReference>
<dbReference type="PDB" id="7V2O">
    <property type="method" value="EM"/>
    <property type="resolution" value="3.50 A"/>
    <property type="chains" value="O=1-89"/>
</dbReference>
<dbReference type="PDB" id="7V2P">
    <property type="method" value="EM"/>
    <property type="resolution" value="3.30 A"/>
    <property type="chains" value="O=1-89"/>
</dbReference>
<dbReference type="PDB" id="7V2Q">
    <property type="method" value="EM"/>
    <property type="resolution" value="3.24 A"/>
    <property type="chains" value="O=1-89"/>
</dbReference>
<dbReference type="PDB" id="8CVJ">
    <property type="method" value="X-ray"/>
    <property type="resolution" value="2.40 A"/>
    <property type="chains" value="1o/2o=1-89"/>
</dbReference>
<dbReference type="PDB" id="8CVK">
    <property type="method" value="X-ray"/>
    <property type="resolution" value="2.50 A"/>
    <property type="chains" value="1o/2o=1-89"/>
</dbReference>
<dbReference type="PDB" id="8CVL">
    <property type="method" value="X-ray"/>
    <property type="resolution" value="2.30 A"/>
    <property type="chains" value="1o/2o=1-89"/>
</dbReference>
<dbReference type="PDB" id="8EKB">
    <property type="method" value="X-ray"/>
    <property type="resolution" value="2.70 A"/>
    <property type="chains" value="1o/2o=1-89"/>
</dbReference>
<dbReference type="PDB" id="8EV6">
    <property type="method" value="X-ray"/>
    <property type="resolution" value="2.95 A"/>
    <property type="chains" value="1o/2o=1-89"/>
</dbReference>
<dbReference type="PDB" id="8EV7">
    <property type="method" value="X-ray"/>
    <property type="resolution" value="2.89 A"/>
    <property type="chains" value="1o/2o=1-89"/>
</dbReference>
<dbReference type="PDB" id="8FC1">
    <property type="method" value="X-ray"/>
    <property type="resolution" value="2.50 A"/>
    <property type="chains" value="1o/2o=1-89"/>
</dbReference>
<dbReference type="PDB" id="8FC2">
    <property type="method" value="X-ray"/>
    <property type="resolution" value="2.50 A"/>
    <property type="chains" value="1o/2o=1-89"/>
</dbReference>
<dbReference type="PDB" id="8FC3">
    <property type="method" value="X-ray"/>
    <property type="resolution" value="2.60 A"/>
    <property type="chains" value="1o/2o=1-89"/>
</dbReference>
<dbReference type="PDB" id="8FC4">
    <property type="method" value="X-ray"/>
    <property type="resolution" value="2.45 A"/>
    <property type="chains" value="1o/2o=1-89"/>
</dbReference>
<dbReference type="PDB" id="8FC5">
    <property type="method" value="X-ray"/>
    <property type="resolution" value="2.65 A"/>
    <property type="chains" value="1o/2o=1-89"/>
</dbReference>
<dbReference type="PDB" id="8FC6">
    <property type="method" value="X-ray"/>
    <property type="resolution" value="2.35 A"/>
    <property type="chains" value="1o/2o=1-89"/>
</dbReference>
<dbReference type="PDB" id="8FOM">
    <property type="method" value="X-ray"/>
    <property type="resolution" value="3.58 A"/>
    <property type="chains" value="QO/XO=1-89"/>
</dbReference>
<dbReference type="PDB" id="8FON">
    <property type="method" value="X-ray"/>
    <property type="resolution" value="3.64 A"/>
    <property type="chains" value="QO/XO=1-89"/>
</dbReference>
<dbReference type="PDB" id="8G29">
    <property type="method" value="X-ray"/>
    <property type="resolution" value="2.55 A"/>
    <property type="chains" value="1o/2o=1-89"/>
</dbReference>
<dbReference type="PDB" id="8G2A">
    <property type="method" value="X-ray"/>
    <property type="resolution" value="2.45 A"/>
    <property type="chains" value="1o/2o=1-89"/>
</dbReference>
<dbReference type="PDB" id="8G2B">
    <property type="method" value="X-ray"/>
    <property type="resolution" value="2.55 A"/>
    <property type="chains" value="1o/2o=1-89"/>
</dbReference>
<dbReference type="PDB" id="8G2C">
    <property type="method" value="X-ray"/>
    <property type="resolution" value="2.65 A"/>
    <property type="chains" value="1o/2o=1-89"/>
</dbReference>
<dbReference type="PDB" id="8G2D">
    <property type="method" value="X-ray"/>
    <property type="resolution" value="2.70 A"/>
    <property type="chains" value="1o/2o=1-89"/>
</dbReference>
<dbReference type="PDB" id="8T8B">
    <property type="method" value="X-ray"/>
    <property type="resolution" value="2.65 A"/>
    <property type="chains" value="1o/2o=1-89"/>
</dbReference>
<dbReference type="PDB" id="8T8C">
    <property type="method" value="X-ray"/>
    <property type="resolution" value="2.60 A"/>
    <property type="chains" value="1o/2o=1-89"/>
</dbReference>
<dbReference type="PDB" id="8UD6">
    <property type="method" value="X-ray"/>
    <property type="resolution" value="2.70 A"/>
    <property type="chains" value="1o/2o=1-89"/>
</dbReference>
<dbReference type="PDB" id="8UD7">
    <property type="method" value="X-ray"/>
    <property type="resolution" value="2.55 A"/>
    <property type="chains" value="1o/2o=1-89"/>
</dbReference>
<dbReference type="PDB" id="8UD8">
    <property type="method" value="X-ray"/>
    <property type="resolution" value="2.60 A"/>
    <property type="chains" value="1o/2o=1-89"/>
</dbReference>
<dbReference type="PDB" id="8UVR">
    <property type="method" value="X-ray"/>
    <property type="resolution" value="2.60 A"/>
    <property type="chains" value="1o/2o=1-89"/>
</dbReference>
<dbReference type="PDB" id="8UVS">
    <property type="method" value="X-ray"/>
    <property type="resolution" value="2.75 A"/>
    <property type="chains" value="1o/2o=1-89"/>
</dbReference>
<dbReference type="PDB" id="8VTU">
    <property type="method" value="X-ray"/>
    <property type="resolution" value="2.40 A"/>
    <property type="chains" value="1o/2o=1-89"/>
</dbReference>
<dbReference type="PDB" id="8VTV">
    <property type="method" value="X-ray"/>
    <property type="resolution" value="2.55 A"/>
    <property type="chains" value="1o/2o=1-89"/>
</dbReference>
<dbReference type="PDB" id="8VTW">
    <property type="method" value="X-ray"/>
    <property type="resolution" value="2.35 A"/>
    <property type="chains" value="1o/2o=1-89"/>
</dbReference>
<dbReference type="PDB" id="8VTX">
    <property type="method" value="X-ray"/>
    <property type="resolution" value="2.40 A"/>
    <property type="chains" value="1o/2o=1-89"/>
</dbReference>
<dbReference type="PDB" id="8VTY">
    <property type="method" value="X-ray"/>
    <property type="resolution" value="2.60 A"/>
    <property type="chains" value="1o/2o=1-89"/>
</dbReference>
<dbReference type="PDB" id="9B00">
    <property type="method" value="X-ray"/>
    <property type="resolution" value="2.80 A"/>
    <property type="chains" value="1o/2o=1-89"/>
</dbReference>
<dbReference type="PDB" id="9D0J">
    <property type="method" value="X-ray"/>
    <property type="resolution" value="2.50 A"/>
    <property type="chains" value="1o/2o=1-89"/>
</dbReference>
<dbReference type="PDB" id="9D7R">
    <property type="method" value="X-ray"/>
    <property type="resolution" value="2.70 A"/>
    <property type="chains" value="1o/2o=1-89"/>
</dbReference>
<dbReference type="PDB" id="9D7S">
    <property type="method" value="X-ray"/>
    <property type="resolution" value="2.85 A"/>
    <property type="chains" value="1o/2o=1-89"/>
</dbReference>
<dbReference type="PDB" id="9D7T">
    <property type="method" value="X-ray"/>
    <property type="resolution" value="2.70 A"/>
    <property type="chains" value="1o/2o=1-89"/>
</dbReference>
<dbReference type="PDB" id="9DFC">
    <property type="method" value="X-ray"/>
    <property type="resolution" value="2.50 A"/>
    <property type="chains" value="1o/2o=1-89"/>
</dbReference>
<dbReference type="PDB" id="9DFD">
    <property type="method" value="X-ray"/>
    <property type="resolution" value="2.60 A"/>
    <property type="chains" value="1o/2o=1-89"/>
</dbReference>
<dbReference type="PDB" id="9DFE">
    <property type="method" value="X-ray"/>
    <property type="resolution" value="2.60 A"/>
    <property type="chains" value="1o/2o=1-89"/>
</dbReference>
<dbReference type="PDBsum" id="1FJG"/>
<dbReference type="PDBsum" id="1FKA"/>
<dbReference type="PDBsum" id="1G1X"/>
<dbReference type="PDBsum" id="1HNW"/>
<dbReference type="PDBsum" id="1HNX"/>
<dbReference type="PDBsum" id="1HNZ"/>
<dbReference type="PDBsum" id="1HR0"/>
<dbReference type="PDBsum" id="1I94"/>
<dbReference type="PDBsum" id="1I95"/>
<dbReference type="PDBsum" id="1I96"/>
<dbReference type="PDBsum" id="1I97"/>
<dbReference type="PDBsum" id="1IBK"/>
<dbReference type="PDBsum" id="1IBL"/>
<dbReference type="PDBsum" id="1IBM"/>
<dbReference type="PDBsum" id="1J5E"/>
<dbReference type="PDBsum" id="1JGO"/>
<dbReference type="PDBsum" id="1JGP"/>
<dbReference type="PDBsum" id="1JGQ"/>
<dbReference type="PDBsum" id="1ML5"/>
<dbReference type="PDBsum" id="1N32"/>
<dbReference type="PDBsum" id="1N33"/>
<dbReference type="PDBsum" id="1N34"/>
<dbReference type="PDBsum" id="1N36"/>
<dbReference type="PDBsum" id="1QD7"/>
<dbReference type="PDBsum" id="1VVJ"/>
<dbReference type="PDBsum" id="1VY4"/>
<dbReference type="PDBsum" id="1VY5"/>
<dbReference type="PDBsum" id="1VY6"/>
<dbReference type="PDBsum" id="1VY7"/>
<dbReference type="PDBsum" id="1XMO"/>
<dbReference type="PDBsum" id="1XMQ"/>
<dbReference type="PDBsum" id="1XNQ"/>
<dbReference type="PDBsum" id="1XNR"/>
<dbReference type="PDBsum" id="2E5L"/>
<dbReference type="PDBsum" id="2F4V"/>
<dbReference type="PDBsum" id="2HHH"/>
<dbReference type="PDBsum" id="2UU9"/>
<dbReference type="PDBsum" id="2UUA"/>
<dbReference type="PDBsum" id="2UUB"/>
<dbReference type="PDBsum" id="2UUC"/>
<dbReference type="PDBsum" id="2UXB"/>
<dbReference type="PDBsum" id="2UXC"/>
<dbReference type="PDBsum" id="2UXD"/>
<dbReference type="PDBsum" id="2VQE"/>
<dbReference type="PDBsum" id="2VQF"/>
<dbReference type="PDBsum" id="2ZM6"/>
<dbReference type="PDBsum" id="3OTO"/>
<dbReference type="PDBsum" id="3T1H"/>
<dbReference type="PDBsum" id="3T1Y"/>
<dbReference type="PDBsum" id="4AQY"/>
<dbReference type="PDBsum" id="4B3M"/>
<dbReference type="PDBsum" id="4B3R"/>
<dbReference type="PDBsum" id="4B3S"/>
<dbReference type="PDBsum" id="4B3T"/>
<dbReference type="PDBsum" id="4DR1"/>
<dbReference type="PDBsum" id="4DR2"/>
<dbReference type="PDBsum" id="4DR3"/>
<dbReference type="PDBsum" id="4DR4"/>
<dbReference type="PDBsum" id="4DR5"/>
<dbReference type="PDBsum" id="4DR6"/>
<dbReference type="PDBsum" id="4DR7"/>
<dbReference type="PDBsum" id="4DUY"/>
<dbReference type="PDBsum" id="4DUZ"/>
<dbReference type="PDBsum" id="4DV0"/>
<dbReference type="PDBsum" id="4DV1"/>
<dbReference type="PDBsum" id="4DV2"/>
<dbReference type="PDBsum" id="4DV3"/>
<dbReference type="PDBsum" id="4DV4"/>
<dbReference type="PDBsum" id="4DV5"/>
<dbReference type="PDBsum" id="4DV6"/>
<dbReference type="PDBsum" id="4DV7"/>
<dbReference type="PDBsum" id="4GKJ"/>
<dbReference type="PDBsum" id="4GKK"/>
<dbReference type="PDBsum" id="4JI0"/>
<dbReference type="PDBsum" id="4JI1"/>
<dbReference type="PDBsum" id="4JI2"/>
<dbReference type="PDBsum" id="4JI3"/>
<dbReference type="PDBsum" id="4JI4"/>
<dbReference type="PDBsum" id="4JI5"/>
<dbReference type="PDBsum" id="4JI6"/>
<dbReference type="PDBsum" id="4JI7"/>
<dbReference type="PDBsum" id="4JI8"/>
<dbReference type="PDBsum" id="4JV5"/>
<dbReference type="PDBsum" id="4JYA"/>
<dbReference type="PDBsum" id="4K0K"/>
<dbReference type="PDBsum" id="4KHP"/>
<dbReference type="PDBsum" id="4L47"/>
<dbReference type="PDBsum" id="4L71"/>
<dbReference type="PDBsum" id="4LEL"/>
<dbReference type="PDBsum" id="4LF4"/>
<dbReference type="PDBsum" id="4LF5"/>
<dbReference type="PDBsum" id="4LF6"/>
<dbReference type="PDBsum" id="4LF7"/>
<dbReference type="PDBsum" id="4LF8"/>
<dbReference type="PDBsum" id="4LF9"/>
<dbReference type="PDBsum" id="4LFA"/>
<dbReference type="PDBsum" id="4LFB"/>
<dbReference type="PDBsum" id="4LFC"/>
<dbReference type="PDBsum" id="4LFZ"/>
<dbReference type="PDBsum" id="4LNT"/>
<dbReference type="PDBsum" id="4LSK"/>
<dbReference type="PDBsum" id="4LT8"/>
<dbReference type="PDBsum" id="4NXM"/>
<dbReference type="PDBsum" id="4NXN"/>
<dbReference type="PDBsum" id="4OX9"/>
<dbReference type="PDBsum" id="4P6F"/>
<dbReference type="PDBsum" id="4P70"/>
<dbReference type="PDBsum" id="4TUA"/>
<dbReference type="PDBsum" id="4TUB"/>
<dbReference type="PDBsum" id="4TUC"/>
<dbReference type="PDBsum" id="4TUD"/>
<dbReference type="PDBsum" id="4TUE"/>
<dbReference type="PDBsum" id="4V42"/>
<dbReference type="PDBsum" id="4V4A"/>
<dbReference type="PDBsum" id="4V4I"/>
<dbReference type="PDBsum" id="4V4P"/>
<dbReference type="PDBsum" id="4V4R"/>
<dbReference type="PDBsum" id="4V4S"/>
<dbReference type="PDBsum" id="4V4T"/>
<dbReference type="PDBsum" id="4V4X"/>
<dbReference type="PDBsum" id="4V4Y"/>
<dbReference type="PDBsum" id="4V4Z"/>
<dbReference type="PDBsum" id="4V51"/>
<dbReference type="PDBsum" id="4V5A"/>
<dbReference type="PDBsum" id="4V5C"/>
<dbReference type="PDBsum" id="4V5D"/>
<dbReference type="PDBsum" id="4V5E"/>
<dbReference type="PDBsum" id="4V5F"/>
<dbReference type="PDBsum" id="4V5G"/>
<dbReference type="PDBsum" id="4V5J"/>
<dbReference type="PDBsum" id="4V5K"/>
<dbReference type="PDBsum" id="4V5L"/>
<dbReference type="PDBsum" id="4V5M"/>
<dbReference type="PDBsum" id="4V5N"/>
<dbReference type="PDBsum" id="4V5P"/>
<dbReference type="PDBsum" id="4V5Q"/>
<dbReference type="PDBsum" id="4V5R"/>
<dbReference type="PDBsum" id="4V5S"/>
<dbReference type="PDBsum" id="4V68"/>
<dbReference type="PDBsum" id="4V6A"/>
<dbReference type="PDBsum" id="4V6F"/>
<dbReference type="PDBsum" id="4V6G"/>
<dbReference type="PDBsum" id="4V7J"/>
<dbReference type="PDBsum" id="4V7K"/>
<dbReference type="PDBsum" id="4V7L"/>
<dbReference type="PDBsum" id="4V7M"/>
<dbReference type="PDBsum" id="4V7W"/>
<dbReference type="PDBsum" id="4V7X"/>
<dbReference type="PDBsum" id="4V7Y"/>
<dbReference type="PDBsum" id="4V7Z"/>
<dbReference type="PDBsum" id="4V87"/>
<dbReference type="PDBsum" id="4V8A"/>
<dbReference type="PDBsum" id="4V8B"/>
<dbReference type="PDBsum" id="4V8C"/>
<dbReference type="PDBsum" id="4V8D"/>
<dbReference type="PDBsum" id="4V8E"/>
<dbReference type="PDBsum" id="4V8F"/>
<dbReference type="PDBsum" id="4V8G"/>
<dbReference type="PDBsum" id="4V8H"/>
<dbReference type="PDBsum" id="4V8I"/>
<dbReference type="PDBsum" id="4V8J"/>
<dbReference type="PDBsum" id="4V8N"/>
<dbReference type="PDBsum" id="4V8O"/>
<dbReference type="PDBsum" id="4V8Q"/>
<dbReference type="PDBsum" id="4V8U"/>
<dbReference type="PDBsum" id="4V8X"/>
<dbReference type="PDBsum" id="4V90"/>
<dbReference type="PDBsum" id="4V95"/>
<dbReference type="PDBsum" id="4V97"/>
<dbReference type="PDBsum" id="4V9A"/>
<dbReference type="PDBsum" id="4V9B"/>
<dbReference type="PDBsum" id="4V9H"/>
<dbReference type="PDBsum" id="4V9I"/>
<dbReference type="PDBsum" id="4V9R"/>
<dbReference type="PDBsum" id="4V9S"/>
<dbReference type="PDBsum" id="4W2E"/>
<dbReference type="PDBsum" id="4W2F"/>
<dbReference type="PDBsum" id="4W2G"/>
<dbReference type="PDBsum" id="4W2H"/>
<dbReference type="PDBsum" id="4W2I"/>
<dbReference type="PDBsum" id="4W4G"/>
<dbReference type="PDBsum" id="4WPO"/>
<dbReference type="PDBsum" id="4WQ1"/>
<dbReference type="PDBsum" id="4WQF"/>
<dbReference type="PDBsum" id="4WQR"/>
<dbReference type="PDBsum" id="4WQU"/>
<dbReference type="PDBsum" id="4WQY"/>
<dbReference type="PDBsum" id="4WR6"/>
<dbReference type="PDBsum" id="4WRA"/>
<dbReference type="PDBsum" id="4WRO"/>
<dbReference type="PDBsum" id="4WSD"/>
<dbReference type="PDBsum" id="4WSM"/>
<dbReference type="PDBsum" id="4WT1"/>
<dbReference type="PDBsum" id="4WT8"/>
<dbReference type="PDBsum" id="4WU1"/>
<dbReference type="PDBsum" id="4WZD"/>
<dbReference type="PDBsum" id="4WZO"/>
<dbReference type="PDBsum" id="4X62"/>
<dbReference type="PDBsum" id="4X64"/>
<dbReference type="PDBsum" id="4X65"/>
<dbReference type="PDBsum" id="4X66"/>
<dbReference type="PDBsum" id="4Y4O"/>
<dbReference type="PDBsum" id="4Y4P"/>
<dbReference type="PDBsum" id="4YHH"/>
<dbReference type="PDBsum" id="4YPB"/>
<dbReference type="PDBsum" id="4YY3"/>
<dbReference type="PDBsum" id="4YZV"/>
<dbReference type="PDBsum" id="4Z3S"/>
<dbReference type="PDBsum" id="4Z8C"/>
<dbReference type="PDBsum" id="4ZER"/>
<dbReference type="PDBsum" id="4ZSN"/>
<dbReference type="PDBsum" id="5A9Z"/>
<dbReference type="PDBsum" id="5AA0"/>
<dbReference type="PDBsum" id="5BR8"/>
<dbReference type="PDBsum" id="5CZP"/>
<dbReference type="PDBsum" id="5D8B"/>
<dbReference type="PDBsum" id="5DFE"/>
<dbReference type="PDBsum" id="5DOX"/>
<dbReference type="PDBsum" id="5DOY"/>
<dbReference type="PDBsum" id="5E7K"/>
<dbReference type="PDBsum" id="5E81"/>
<dbReference type="PDBsum" id="5EL4"/>
<dbReference type="PDBsum" id="5EL5"/>
<dbReference type="PDBsum" id="5EL6"/>
<dbReference type="PDBsum" id="5EL7"/>
<dbReference type="PDBsum" id="5F8K"/>
<dbReference type="PDBsum" id="5FDU"/>
<dbReference type="PDBsum" id="5FDV"/>
<dbReference type="PDBsum" id="5HAU"/>
<dbReference type="PDBsum" id="5HCP"/>
<dbReference type="PDBsum" id="5HCQ"/>
<dbReference type="PDBsum" id="5HCR"/>
<dbReference type="PDBsum" id="5HD1"/>
<dbReference type="PDBsum" id="5IB7"/>
<dbReference type="PDBsum" id="5IB8"/>
<dbReference type="PDBsum" id="5IBB"/>
<dbReference type="PDBsum" id="5IMQ"/>
<dbReference type="PDBsum" id="5IMR"/>
<dbReference type="PDBsum" id="5IWA"/>
<dbReference type="PDBsum" id="5J30"/>
<dbReference type="PDBsum" id="5J3C"/>
<dbReference type="PDBsum" id="5J4B"/>
<dbReference type="PDBsum" id="5J4C"/>
<dbReference type="PDBsum" id="5J8B"/>
<dbReference type="PDBsum" id="5LMN"/>
<dbReference type="PDBsum" id="5LMO"/>
<dbReference type="PDBsum" id="5LMP"/>
<dbReference type="PDBsum" id="5LMQ"/>
<dbReference type="PDBsum" id="5LMR"/>
<dbReference type="PDBsum" id="5LMS"/>
<dbReference type="PDBsum" id="5LMT"/>
<dbReference type="PDBsum" id="5LMU"/>
<dbReference type="PDBsum" id="5LMV"/>
<dbReference type="PDBsum" id="5NDJ"/>
<dbReference type="PDBsum" id="5NDK"/>
<dbReference type="PDBsum" id="5OT7"/>
<dbReference type="PDBsum" id="5UQ7"/>
<dbReference type="PDBsum" id="5UQ8"/>
<dbReference type="PDBsum" id="5VP2"/>
<dbReference type="PDBsum" id="5VPO"/>
<dbReference type="PDBsum" id="5VPP"/>
<dbReference type="PDBsum" id="5W4K"/>
<dbReference type="PDBsum" id="5WIS"/>
<dbReference type="PDBsum" id="5WIT"/>
<dbReference type="PDBsum" id="5WNP"/>
<dbReference type="PDBsum" id="5WNQ"/>
<dbReference type="PDBsum" id="5WNR"/>
<dbReference type="PDBsum" id="5WNS"/>
<dbReference type="PDBsum" id="5WNT"/>
<dbReference type="PDBsum" id="5WNU"/>
<dbReference type="PDBsum" id="5WNV"/>
<dbReference type="PDBsum" id="5ZLU"/>
<dbReference type="PDBsum" id="6BUW"/>
<dbReference type="PDBsum" id="6BZ6"/>
<dbReference type="PDBsum" id="6BZ7"/>
<dbReference type="PDBsum" id="6BZ8"/>
<dbReference type="PDBsum" id="6C5L"/>
<dbReference type="PDBsum" id="6CAE"/>
<dbReference type="PDBsum" id="6CAO"/>
<dbReference type="PDBsum" id="6CAP"/>
<dbReference type="PDBsum" id="6CAQ"/>
<dbReference type="PDBsum" id="6CAR"/>
<dbReference type="PDBsum" id="6CAS"/>
<dbReference type="PDBsum" id="6CFJ"/>
<dbReference type="PDBsum" id="6CFK"/>
<dbReference type="PDBsum" id="6CFL"/>
<dbReference type="PDBsum" id="6CZR"/>
<dbReference type="PDBsum" id="6DTI"/>
<dbReference type="PDBsum" id="6FKR"/>
<dbReference type="PDBsum" id="6GSJ"/>
<dbReference type="PDBsum" id="6GSK"/>
<dbReference type="PDBsum" id="6GSL"/>
<dbReference type="PDBsum" id="6GZQ"/>
<dbReference type="PDBsum" id="6GZX"/>
<dbReference type="PDBsum" id="6GZZ"/>
<dbReference type="PDBsum" id="6MKN"/>
<dbReference type="PDBsum" id="6MPF"/>
<dbReference type="PDBsum" id="6MPI"/>
<dbReference type="PDBsum" id="6N9E"/>
<dbReference type="PDBsum" id="6N9F"/>
<dbReference type="PDBsum" id="6ND5"/>
<dbReference type="PDBsum" id="6ND6"/>
<dbReference type="PDBsum" id="6NDK"/>
<dbReference type="PDBsum" id="6NSH"/>
<dbReference type="PDBsum" id="6NTA"/>
<dbReference type="PDBsum" id="6NUO"/>
<dbReference type="PDBsum" id="6NWY"/>
<dbReference type="PDBsum" id="6NY6"/>
<dbReference type="PDBsum" id="6O3M"/>
<dbReference type="PDBsum" id="6O97"/>
<dbReference type="PDBsum" id="6OF1"/>
<dbReference type="PDBsum" id="6OF6"/>
<dbReference type="PDBsum" id="6OJ2"/>
<dbReference type="PDBsum" id="6OPE"/>
<dbReference type="PDBsum" id="6ORD"/>
<dbReference type="PDBsum" id="6OSI"/>
<dbReference type="PDBsum" id="6OTR"/>
<dbReference type="PDBsum" id="6OXA"/>
<dbReference type="PDBsum" id="6OXI"/>
<dbReference type="PDBsum" id="6Q95"/>
<dbReference type="PDBsum" id="6QNQ"/>
<dbReference type="PDBsum" id="6QNR"/>
<dbReference type="PDBsum" id="6UCQ"/>
<dbReference type="PDBsum" id="6UO1"/>
<dbReference type="PDBsum" id="6XHV"/>
<dbReference type="PDBsum" id="6XHW"/>
<dbReference type="PDBsum" id="6XHX"/>
<dbReference type="PDBsum" id="6XHY"/>
<dbReference type="PDBsum" id="6XQD"/>
<dbReference type="PDBsum" id="6XQE"/>
<dbReference type="PDBsum" id="7AZO"/>
<dbReference type="PDBsum" id="7AZS"/>
<dbReference type="PDBsum" id="7DUG"/>
<dbReference type="PDBsum" id="7DUH"/>
<dbReference type="PDBsum" id="7DUI"/>
<dbReference type="PDBsum" id="7DUJ"/>
<dbReference type="PDBsum" id="7DUK"/>
<dbReference type="PDBsum" id="7DUL"/>
<dbReference type="PDBsum" id="7JQL"/>
<dbReference type="PDBsum" id="7JQM"/>
<dbReference type="PDBsum" id="7LH5"/>
<dbReference type="PDBsum" id="7MD7"/>
<dbReference type="PDBsum" id="7RQ8"/>
<dbReference type="PDBsum" id="7RQ9"/>
<dbReference type="PDBsum" id="7RQA"/>
<dbReference type="PDBsum" id="7RQB"/>
<dbReference type="PDBsum" id="7RQC"/>
<dbReference type="PDBsum" id="7RQD"/>
<dbReference type="PDBsum" id="7RQE"/>
<dbReference type="PDBsum" id="7U2H"/>
<dbReference type="PDBsum" id="7U2I"/>
<dbReference type="PDBsum" id="7U2J"/>
<dbReference type="PDBsum" id="7V2L"/>
<dbReference type="PDBsum" id="7V2M"/>
<dbReference type="PDBsum" id="7V2N"/>
<dbReference type="PDBsum" id="7V2O"/>
<dbReference type="PDBsum" id="7V2P"/>
<dbReference type="PDBsum" id="7V2Q"/>
<dbReference type="PDBsum" id="8CVJ"/>
<dbReference type="PDBsum" id="8CVK"/>
<dbReference type="PDBsum" id="8CVL"/>
<dbReference type="PDBsum" id="8EKB"/>
<dbReference type="PDBsum" id="8EV6"/>
<dbReference type="PDBsum" id="8EV7"/>
<dbReference type="PDBsum" id="8FC1"/>
<dbReference type="PDBsum" id="8FC2"/>
<dbReference type="PDBsum" id="8FC3"/>
<dbReference type="PDBsum" id="8FC4"/>
<dbReference type="PDBsum" id="8FC5"/>
<dbReference type="PDBsum" id="8FC6"/>
<dbReference type="PDBsum" id="8FOM"/>
<dbReference type="PDBsum" id="8FON"/>
<dbReference type="PDBsum" id="8G29"/>
<dbReference type="PDBsum" id="8G2A"/>
<dbReference type="PDBsum" id="8G2B"/>
<dbReference type="PDBsum" id="8G2C"/>
<dbReference type="PDBsum" id="8G2D"/>
<dbReference type="PDBsum" id="8T8B"/>
<dbReference type="PDBsum" id="8T8C"/>
<dbReference type="PDBsum" id="8UD6"/>
<dbReference type="PDBsum" id="8UD7"/>
<dbReference type="PDBsum" id="8UD8"/>
<dbReference type="PDBsum" id="8UVR"/>
<dbReference type="PDBsum" id="8UVS"/>
<dbReference type="PDBsum" id="8VTU"/>
<dbReference type="PDBsum" id="8VTV"/>
<dbReference type="PDBsum" id="8VTW"/>
<dbReference type="PDBsum" id="8VTX"/>
<dbReference type="PDBsum" id="8VTY"/>
<dbReference type="PDBsum" id="9B00"/>
<dbReference type="PDBsum" id="9D0J"/>
<dbReference type="PDBsum" id="9D7R"/>
<dbReference type="PDBsum" id="9D7S"/>
<dbReference type="PDBsum" id="9D7T"/>
<dbReference type="PDBsum" id="9DFC"/>
<dbReference type="PDBsum" id="9DFD"/>
<dbReference type="PDBsum" id="9DFE"/>
<dbReference type="EMDB" id="EMD-0101"/>
<dbReference type="EMDB" id="EMD-0104"/>
<dbReference type="EMDB" id="EMD-0105"/>
<dbReference type="EMDB" id="EMD-31655"/>
<dbReference type="EMDB" id="EMD-31656"/>
<dbReference type="EMDB" id="EMD-31657"/>
<dbReference type="EMDB" id="EMD-31658"/>
<dbReference type="EMDB" id="EMD-31659"/>
<dbReference type="EMDB" id="EMD-31660"/>
<dbReference type="EMDB" id="EMD-3852"/>
<dbReference type="EMDB" id="EMD-4073"/>
<dbReference type="EMDB" id="EMD-4074"/>
<dbReference type="EMDB" id="EMD-4075"/>
<dbReference type="EMDB" id="EMD-4076"/>
<dbReference type="EMDB" id="EMD-4077"/>
<dbReference type="EMDB" id="EMD-4078"/>
<dbReference type="EMDB" id="EMD-4079"/>
<dbReference type="EMDB" id="EMD-4080"/>
<dbReference type="EMDB" id="EMD-4083"/>
<dbReference type="EMDB" id="EMD-4475"/>
<dbReference type="EMDB" id="EMD-6934"/>
<dbReference type="EMDB" id="EMD-8596"/>
<dbReference type="EMDB" id="EMD-8597"/>
<dbReference type="SMR" id="Q5SJ76"/>
<dbReference type="IntAct" id="Q5SJ76">
    <property type="interactions" value="12"/>
</dbReference>
<dbReference type="DrugBank" id="DB08185">
    <property type="generic name" value="2-METHYLTHIO-N6-ISOPENTENYL-ADENOSINE-5'-MONOPHOSPHATE"/>
</dbReference>
<dbReference type="EnsemblBacteria" id="BAD70961">
    <property type="protein sequence ID" value="BAD70961"/>
    <property type="gene ID" value="BAD70961"/>
</dbReference>
<dbReference type="GeneID" id="3169463"/>
<dbReference type="KEGG" id="ttj:TTHA1138"/>
<dbReference type="PATRIC" id="fig|300852.9.peg.1117"/>
<dbReference type="eggNOG" id="COG0184">
    <property type="taxonomic scope" value="Bacteria"/>
</dbReference>
<dbReference type="HOGENOM" id="CLU_148518_0_0_0"/>
<dbReference type="PhylomeDB" id="Q5SJ76"/>
<dbReference type="EvolutionaryTrace" id="Q5SJ76"/>
<dbReference type="Proteomes" id="UP000000532">
    <property type="component" value="Chromosome"/>
</dbReference>
<dbReference type="GO" id="GO:0022627">
    <property type="term" value="C:cytosolic small ribosomal subunit"/>
    <property type="evidence" value="ECO:0007669"/>
    <property type="project" value="TreeGrafter"/>
</dbReference>
<dbReference type="GO" id="GO:0019843">
    <property type="term" value="F:rRNA binding"/>
    <property type="evidence" value="ECO:0007669"/>
    <property type="project" value="UniProtKB-UniRule"/>
</dbReference>
<dbReference type="GO" id="GO:0003735">
    <property type="term" value="F:structural constituent of ribosome"/>
    <property type="evidence" value="ECO:0007669"/>
    <property type="project" value="InterPro"/>
</dbReference>
<dbReference type="GO" id="GO:0006412">
    <property type="term" value="P:translation"/>
    <property type="evidence" value="ECO:0007669"/>
    <property type="project" value="UniProtKB-UniRule"/>
</dbReference>
<dbReference type="CDD" id="cd00353">
    <property type="entry name" value="Ribosomal_S15p_S13e"/>
    <property type="match status" value="1"/>
</dbReference>
<dbReference type="FunFam" id="1.10.287.10:FF:000002">
    <property type="entry name" value="30S ribosomal protein S15"/>
    <property type="match status" value="1"/>
</dbReference>
<dbReference type="Gene3D" id="6.10.250.3130">
    <property type="match status" value="1"/>
</dbReference>
<dbReference type="Gene3D" id="1.10.287.10">
    <property type="entry name" value="S15/NS1, RNA-binding"/>
    <property type="match status" value="1"/>
</dbReference>
<dbReference type="HAMAP" id="MF_01343_B">
    <property type="entry name" value="Ribosomal_uS15_B"/>
    <property type="match status" value="1"/>
</dbReference>
<dbReference type="InterPro" id="IPR000589">
    <property type="entry name" value="Ribosomal_uS15"/>
</dbReference>
<dbReference type="InterPro" id="IPR005290">
    <property type="entry name" value="Ribosomal_uS15_bac-type"/>
</dbReference>
<dbReference type="InterPro" id="IPR009068">
    <property type="entry name" value="uS15_NS1_RNA-bd_sf"/>
</dbReference>
<dbReference type="NCBIfam" id="TIGR00952">
    <property type="entry name" value="S15_bact"/>
    <property type="match status" value="1"/>
</dbReference>
<dbReference type="PANTHER" id="PTHR23321">
    <property type="entry name" value="RIBOSOMAL PROTEIN S15, BACTERIAL AND ORGANELLAR"/>
    <property type="match status" value="1"/>
</dbReference>
<dbReference type="PANTHER" id="PTHR23321:SF26">
    <property type="entry name" value="SMALL RIBOSOMAL SUBUNIT PROTEIN US15M"/>
    <property type="match status" value="1"/>
</dbReference>
<dbReference type="Pfam" id="PF00312">
    <property type="entry name" value="Ribosomal_S15"/>
    <property type="match status" value="1"/>
</dbReference>
<dbReference type="SMART" id="SM01387">
    <property type="entry name" value="Ribosomal_S15"/>
    <property type="match status" value="1"/>
</dbReference>
<dbReference type="SUPFAM" id="SSF47060">
    <property type="entry name" value="S15/NS1 RNA-binding domain"/>
    <property type="match status" value="1"/>
</dbReference>
<dbReference type="PROSITE" id="PS00362">
    <property type="entry name" value="RIBOSOMAL_S15"/>
    <property type="match status" value="1"/>
</dbReference>
<name>RS15_THET8</name>
<organism>
    <name type="scientific">Thermus thermophilus (strain ATCC 27634 / DSM 579 / HB8)</name>
    <dbReference type="NCBI Taxonomy" id="300852"/>
    <lineage>
        <taxon>Bacteria</taxon>
        <taxon>Thermotogati</taxon>
        <taxon>Deinococcota</taxon>
        <taxon>Deinococci</taxon>
        <taxon>Thermales</taxon>
        <taxon>Thermaceae</taxon>
        <taxon>Thermus</taxon>
    </lineage>
</organism>
<keyword id="KW-0002">3D-structure</keyword>
<keyword id="KW-0903">Direct protein sequencing</keyword>
<keyword id="KW-1185">Reference proteome</keyword>
<keyword id="KW-0687">Ribonucleoprotein</keyword>
<keyword id="KW-0689">Ribosomal protein</keyword>
<keyword id="KW-0694">RNA-binding</keyword>
<keyword id="KW-0699">rRNA-binding</keyword>
<proteinExistence type="evidence at protein level"/>
<reference key="1">
    <citation type="journal article" date="1995" name="J. Biol. Chem.">
        <title>Molecular genetic and protein chemical characterization of the cytochrome ba3 from Thermus thermophilus HB8.</title>
        <authorList>
            <person name="Keightley J.A."/>
            <person name="Zimmermann B.H."/>
            <person name="Mather M.W."/>
            <person name="Springer P."/>
            <person name="Pastuszyn A."/>
            <person name="Lawrence D.M."/>
            <person name="Fee J.A."/>
        </authorList>
    </citation>
    <scope>NUCLEOTIDE SEQUENCE [GENOMIC DNA]</scope>
</reference>
<reference key="2">
    <citation type="submission" date="2004-11" db="EMBL/GenBank/DDBJ databases">
        <title>Complete genome sequence of Thermus thermophilus HB8.</title>
        <authorList>
            <person name="Masui R."/>
            <person name="Kurokawa K."/>
            <person name="Nakagawa N."/>
            <person name="Tokunaga F."/>
            <person name="Koyama Y."/>
            <person name="Shibata T."/>
            <person name="Oshima T."/>
            <person name="Yokoyama S."/>
            <person name="Yasunaga T."/>
            <person name="Kuramitsu S."/>
        </authorList>
    </citation>
    <scope>NUCLEOTIDE SEQUENCE [LARGE SCALE GENOMIC DNA]</scope>
    <source>
        <strain>ATCC 27634 / DSM 579 / HB8</strain>
    </source>
</reference>
<reference key="3">
    <citation type="journal article" date="1994" name="Eur. J. Biochem.">
        <title>Purification and characterization of the 30S ribosomal proteins from the bacterium Thermus thermophilus.</title>
        <authorList>
            <person name="Tsiboli P."/>
            <person name="Herfurth E."/>
            <person name="Choli T."/>
        </authorList>
    </citation>
    <scope>PROTEIN SEQUENCE OF 2-22</scope>
</reference>
<reference key="4">
    <citation type="journal article" date="1999" name="Science">
        <title>Identification of an RNA-protein bridge spanning the ribosomal subunit interface.</title>
        <authorList>
            <person name="Culver G.M."/>
            <person name="Cate J.H.D."/>
            <person name="Yusupova G.Z."/>
            <person name="Yusupov M.M."/>
            <person name="Noller H.F."/>
        </authorList>
    </citation>
    <scope>INTERSUBUNIT BRIDGE FORMATION</scope>
</reference>
<reference key="5">
    <citation type="journal article" date="2005" name="Proteomics">
        <title>Extending ribosomal protein identifications to unsequenced bacterial strains using matrix-assisted laser desorption/ionization mass spectrometry.</title>
        <authorList>
            <person name="Suh M.-J."/>
            <person name="Hamburg D.M."/>
            <person name="Gregory S.T."/>
            <person name="Dahlberg A.E."/>
            <person name="Limbach P.A."/>
        </authorList>
    </citation>
    <scope>MASS SPECTROMETRY</scope>
    <source>
        <strain>ATCC 27634 / DSM 579 / HB8</strain>
    </source>
</reference>
<reference key="6">
    <citation type="journal article" date="1999" name="Nature">
        <title>Structure of a bacterial 30S ribosomal subunit at 5.5 A resolution.</title>
        <authorList>
            <person name="Clemons W.M. Jr."/>
            <person name="May J.L.C."/>
            <person name="Wimberly B.T."/>
            <person name="McCutcheon J.P."/>
            <person name="Capel M.S."/>
            <person name="Ramakrishnan V."/>
        </authorList>
    </citation>
    <scope>X-RAY CRYSTALLOGRAPHY (5.5 ANGSTROMS) OF THE 30S SUBUNIT</scope>
</reference>
<reference key="7">
    <citation type="journal article" date="2000" name="Nature">
        <title>Structure of the 30S ribosomal subunit.</title>
        <authorList>
            <person name="Wimberly B.T."/>
            <person name="Brodersen D.E."/>
            <person name="Clemons W.M. Jr."/>
            <person name="Morgan-Warren R.J."/>
            <person name="Carter A.P."/>
            <person name="Vonrhein C."/>
            <person name="Hartsch T."/>
            <person name="Ramakrishnan V."/>
        </authorList>
    </citation>
    <scope>X-RAY CRYSTALLOGRAPHY (3.05 ANGSTROMS) OF THE 30S SUBUNIT</scope>
</reference>
<reference key="8">
    <citation type="journal article" date="2000" name="Cell">
        <title>Structure of functionally activated small ribosomal subunit at 3.3 A resolution.</title>
        <authorList>
            <person name="Schluenzen F."/>
            <person name="Tocilj A."/>
            <person name="Zarivach R."/>
            <person name="Harms J."/>
            <person name="Gluehmann M."/>
            <person name="Janell D."/>
            <person name="Bashan A."/>
            <person name="Bartels H."/>
            <person name="Agmon I."/>
            <person name="Franceschi F."/>
            <person name="Yonath A."/>
        </authorList>
    </citation>
    <scope>X-RAY CRYSTALLOGRAPHY (3.3 ANGSTROMS) OF THE 30S SUBUNIT</scope>
</reference>
<reference key="9">
    <citation type="journal article" date="2000" name="Cell">
        <title>The structural basis for the action of the antibiotics tetracycline, pactamycin, and hygromycin B on the 30S ribosomal subunit.</title>
        <authorList>
            <person name="Brodersen D.E."/>
            <person name="Clemons W.M. Jr."/>
            <person name="Carter A.P."/>
            <person name="Morgan-Warren R.J."/>
            <person name="Wimberly B.T."/>
            <person name="Ramakrishnan V."/>
        </authorList>
    </citation>
    <scope>X-RAY CRYSTALLOGRAPHY (3.3 ANGSTROMS) OF THE 30S SUBUNIT</scope>
</reference>
<reference key="10">
    <citation type="journal article" date="2000" name="Nature">
        <title>Functional insights from the structure of the 30S ribosomal subunit and its interactions with antibiotics.</title>
        <authorList>
            <person name="Carter A.P."/>
            <person name="Clemons W.M. Jr."/>
            <person name="Brodersen D.E."/>
            <person name="Morgan-Warren R.J."/>
            <person name="Wimberly B.T."/>
            <person name="Ramakrishnan V."/>
        </authorList>
    </citation>
    <scope>X-RAY CRYSTALLOGRAPHY (3.0 ANGSTROMS) OF THE 30S SUBUNIT</scope>
</reference>
<reference key="11">
    <citation type="journal article" date="2000" name="Science">
        <title>Structure of the S15,S6,S18-rRNA complex: assembly of the 30S ribosome central domain.</title>
        <authorList>
            <person name="Agalarov S.C."/>
            <person name="Prasad G.S."/>
            <person name="Funke P.M."/>
            <person name="Stout C.D."/>
            <person name="Williamson J.R."/>
        </authorList>
    </citation>
    <scope>X-RAY CRYSTALLOGRAPHY (2.6 ANGSTROMS) OF A 30S SUBUNIT FRAGMENT</scope>
</reference>
<reference key="12">
    <citation type="journal article" date="2001" name="Cell">
        <title>The path of messenger RNA through the ribosome.</title>
        <authorList>
            <person name="Yusupova G.Z."/>
            <person name="Yusupov M.M."/>
            <person name="Cate J.H.D."/>
            <person name="Noller H.F."/>
        </authorList>
    </citation>
    <scope>X-RAY CRYSTALLOGRAPHY (5.0 ANGSTROMS) OF THE RIBOSOME</scope>
</reference>
<reference key="13">
    <citation type="journal article" date="2001" name="EMBO J.">
        <title>Crystal structures of complexes of the small ribosomal subunit with tetracycline, edeine and IF3.</title>
        <authorList>
            <person name="Pioletti M."/>
            <person name="Schluenzen F."/>
            <person name="Harms J."/>
            <person name="Zarivach R."/>
            <person name="Gluehmann M."/>
            <person name="Avila H."/>
            <person name="Bashan A."/>
            <person name="Bartels H."/>
            <person name="Auerbach T."/>
            <person name="Jacobi C."/>
            <person name="Hartsch T."/>
            <person name="Yonath A."/>
            <person name="Franceschi F."/>
        </authorList>
    </citation>
    <scope>X-RAY CRYSTALLOGRAPHY (3.2 ANGSTROMS) OF THE 30S SUBUNIT</scope>
</reference>
<reference key="14">
    <citation type="journal article" date="2001" name="Science">
        <title>Crystal structure of an initiation factor bound to the 30S ribosomal subunit.</title>
        <authorList>
            <person name="Carter A.P."/>
            <person name="Clemons W.M. Jr."/>
            <person name="Brodersen D.E."/>
            <person name="Morgan-Warren R.J."/>
            <person name="Hartsch T."/>
            <person name="Wimberly B.T."/>
            <person name="Ramakrishnan V."/>
        </authorList>
    </citation>
    <scope>X-RAY CRYSTALLOGRAPHY (3.2 ANGSTROMS) OF THE 30S SUBUNIT</scope>
</reference>
<reference key="15">
    <citation type="journal article" date="2001" name="Science">
        <title>Crystal structure of the ribosome at 5.5 A resolution.</title>
        <authorList>
            <person name="Yusupov M.M."/>
            <person name="Yusupova G.Z."/>
            <person name="Baucom A."/>
            <person name="Lieberman K."/>
            <person name="Earnest T.N."/>
            <person name="Cate J.H.D."/>
            <person name="Noller H.F."/>
        </authorList>
    </citation>
    <scope>X-RAY CRYSTALLOGRAPHY (5.5 ANGSTROMS) OF THE RIBOSOME</scope>
    <scope>INTERSUBUNIT BRIDGE FORMATION</scope>
</reference>
<reference key="16">
    <citation type="journal article" date="2001" name="Science">
        <title>Recognition of cognate transfer RNA by the 30S ribosomal subunit.</title>
        <authorList>
            <person name="Ogle J.M."/>
            <person name="Brodersen D.E."/>
            <person name="Clemons W.M. Jr."/>
            <person name="Tarry M.J."/>
            <person name="Carter A.P."/>
            <person name="Ramakrishnan V."/>
        </authorList>
    </citation>
    <scope>X-RAY CRYSTALLOGRAPHY (3.11 ANGSTROMS) OF THE 30S SUBUNIT</scope>
</reference>
<reference key="17">
    <citation type="journal article" date="2002" name="J. Mol. Biol.">
        <title>Crystal structure of the 30S ribosomal subunit from Thermus thermophilus: structure of the proteins and their interactions with 16S RNA.</title>
        <authorList>
            <person name="Brodersen D.E."/>
            <person name="Clemons W.M. Jr."/>
            <person name="Carter A.P."/>
            <person name="Wimberly B.T."/>
            <person name="Ramakrishnan V."/>
        </authorList>
    </citation>
    <scope>X-RAY CRYSTALLOGRAPHY (3.05 ANGSTROMS) OF THE 30S SUBUNIT</scope>
</reference>
<reference key="18">
    <citation type="journal article" date="2005" name="Cell">
        <title>Crystal structures of the ribosome in complex with release factors RF1 and RF2 bound to a cognate stop codon.</title>
        <authorList>
            <person name="Petry S."/>
            <person name="Brodersen D.E."/>
            <person name="Murphy F.V."/>
            <person name="Dunham C.M."/>
            <person name="Selmer M."/>
            <person name="Tarry M.J."/>
            <person name="Kelley A.C."/>
            <person name="Ramakrishnan V."/>
        </authorList>
    </citation>
    <scope>X-RAY CRYSTALLOGRAPHY (5.90 ANGSTROMS) OF 70S RIBOSOME IN COMPLEX WITH RF1 OR RF2</scope>
    <scope>SUBUNIT</scope>
</reference>
<reference key="19">
    <citation type="journal article" date="2008" name="Science">
        <title>Insights into translational termination from the structure of RF2 bound to the ribosome.</title>
        <authorList>
            <person name="Weixlbaumer A."/>
            <person name="Jin H."/>
            <person name="Neubauer C."/>
            <person name="Voorhees R.M."/>
            <person name="Petry S."/>
            <person name="Kelley A.C."/>
            <person name="Ramakrishnan V."/>
        </authorList>
    </citation>
    <scope>X-RAY CRYSTALLOGRAPHY (3.45 ANGSTROMS) OF 70S RIBOSOME IN COMPLEX WITH RF2</scope>
    <scope>SUBUNIT</scope>
</reference>
<reference key="20">
    <citation type="journal article" date="2010" name="Proc. Natl. Acad. Sci. U.S.A.">
        <title>Structure of the 70S ribosome bound to release factor 2 and a substrate analog provides insights into catalysis of peptide release.</title>
        <authorList>
            <person name="Jin H."/>
            <person name="Kelley A.C."/>
            <person name="Loakes D."/>
            <person name="Ramakrishnan V."/>
        </authorList>
    </citation>
    <scope>X-RAY CRYSTALLOGRAPHY (3.10 ANGSTROMS) OF 70S RIBOSOME IN COMPLEX WITH RF2</scope>
    <scope>SUBUNIT</scope>
</reference>
<sequence>MPITKEEKQKVIQEFARFPGDTGSTEVQVALLTLRINRLSEHLKVHKKDHHSHRGLLMMVGQRRRLLRYLQREDPERYRALIEKLGIRG</sequence>
<comment type="function">
    <text evidence="1">One of the primary rRNA binding proteins, it binds directly to 16S rRNA where it helps nucleate assembly of the platform of the 30S subunit by binding and bridging several RNA helices of the 16S rRNA.</text>
</comment>
<comment type="function">
    <text evidence="2">Forms an intersubunit bridge (bridge B4) with the 23S rRNA of the 50S subunit in the ribosome.</text>
</comment>
<comment type="subunit">
    <text>Part of the 30S ribosomal subunit. Forms a bridge to the 50S subunit in the 70S ribosome, contacting the 23S rRNA.</text>
</comment>
<comment type="mass spectrometry"/>
<comment type="similarity">
    <text evidence="1">Belongs to the universal ribosomal protein uS15 family.</text>
</comment>
<accession>Q5SJ76</accession>
<protein>
    <recommendedName>
        <fullName evidence="1">Small ribosomal subunit protein uS15</fullName>
    </recommendedName>
    <alternativeName>
        <fullName evidence="5">30S ribosomal protein S15</fullName>
    </alternativeName>
</protein>
<feature type="initiator methionine" description="Removed" evidence="4">
    <location>
        <position position="1"/>
    </location>
</feature>
<feature type="chain" id="PRO_0000115574" description="Small ribosomal subunit protein uS15">
    <location>
        <begin position="2"/>
        <end position="89"/>
    </location>
</feature>
<feature type="helix" evidence="6">
    <location>
        <begin position="5"/>
        <end position="13"/>
    </location>
</feature>
<feature type="strand" evidence="7">
    <location>
        <begin position="17"/>
        <end position="20"/>
    </location>
</feature>
<feature type="strand" evidence="9">
    <location>
        <begin position="22"/>
        <end position="24"/>
    </location>
</feature>
<feature type="helix" evidence="6">
    <location>
        <begin position="25"/>
        <end position="42"/>
    </location>
</feature>
<feature type="strand" evidence="8">
    <location>
        <begin position="43"/>
        <end position="45"/>
    </location>
</feature>
<feature type="helix" evidence="6">
    <location>
        <begin position="50"/>
        <end position="73"/>
    </location>
</feature>
<feature type="helix" evidence="6">
    <location>
        <begin position="75"/>
        <end position="85"/>
    </location>
</feature>